<reference key="1">
    <citation type="journal article" date="2003" name="J. Biochem.">
        <title>Induction of PYPAF1 during in vitro maturation of mouse mast cells.</title>
        <authorList>
            <person name="Kikuchi-Yanoshita R."/>
            <person name="Taketomi Y."/>
            <person name="Koga K."/>
            <person name="Sugiki T."/>
            <person name="Atsumi Y."/>
            <person name="Saito T."/>
            <person name="Ishii S."/>
            <person name="Hisada M."/>
            <person name="Suzuki-Nishimura T."/>
            <person name="Uchida M.K."/>
            <person name="Moon T.-C."/>
            <person name="Chang H.-W."/>
            <person name="Sawada M."/>
            <person name="Inagaki N."/>
            <person name="Nagai H."/>
            <person name="Murakami M."/>
            <person name="Kudo I."/>
        </authorList>
    </citation>
    <scope>NUCLEOTIDE SEQUENCE [MRNA] (ISOFORMS 1; 2; 3 AND 4)</scope>
    <scope>SUBCELLULAR LOCATION</scope>
    <source>
        <strain>BALB/cJ</strain>
    </source>
</reference>
<reference key="2">
    <citation type="journal article" date="2004" name="Gene">
        <title>Structural, expression, and evolutionary analysis of mouse CIAS1.</title>
        <authorList>
            <person name="Anderson J.P."/>
            <person name="Mueller J.L."/>
            <person name="Rosengren S."/>
            <person name="Boyle D.L."/>
            <person name="Schaner P."/>
            <person name="Cannon S.B."/>
            <person name="Goodyear C.S."/>
            <person name="Hoffman H.M."/>
        </authorList>
    </citation>
    <scope>NUCLEOTIDE SEQUENCE [GENOMIC DNA / MRNA] (ISOFORM 1)</scope>
    <scope>TISSUE SPECIFICITY</scope>
    <source>
        <strain>129/Sv</strain>
        <strain>BALB/cJ</strain>
        <strain>C57BL/6J</strain>
    </source>
</reference>
<reference key="3">
    <citation type="submission" date="2003-07" db="EMBL/GenBank/DDBJ databases">
        <title>Murine NALPs: a family of proteins involved in inflammation.</title>
        <authorList>
            <person name="Martinon F."/>
            <person name="Hofmann K."/>
            <person name="Tschopp J."/>
        </authorList>
    </citation>
    <scope>NUCLEOTIDE SEQUENCE [MRNA] (ISOFORM 1)</scope>
    <source>
        <strain>C57BL/6J</strain>
    </source>
</reference>
<reference key="4">
    <citation type="submission" date="2013-05" db="EMBL/GenBank/DDBJ databases">
        <authorList>
            <person name="Huang Z.Q."/>
            <person name="Yu M."/>
            <person name="Tong S."/>
        </authorList>
    </citation>
    <scope>NUCLEOTIDE SEQUENCE [MRNA] (ISOFORM 1)</scope>
    <source>
        <strain>BALB/cJ</strain>
    </source>
</reference>
<reference key="5">
    <citation type="journal article" date="2009" name="PLoS Biol.">
        <title>Lineage-specific biology revealed by a finished genome assembly of the mouse.</title>
        <authorList>
            <person name="Church D.M."/>
            <person name="Goodstadt L."/>
            <person name="Hillier L.W."/>
            <person name="Zody M.C."/>
            <person name="Goldstein S."/>
            <person name="She X."/>
            <person name="Bult C.J."/>
            <person name="Agarwala R."/>
            <person name="Cherry J.L."/>
            <person name="DiCuccio M."/>
            <person name="Hlavina W."/>
            <person name="Kapustin Y."/>
            <person name="Meric P."/>
            <person name="Maglott D."/>
            <person name="Birtle Z."/>
            <person name="Marques A.C."/>
            <person name="Graves T."/>
            <person name="Zhou S."/>
            <person name="Teague B."/>
            <person name="Potamousis K."/>
            <person name="Churas C."/>
            <person name="Place M."/>
            <person name="Herschleb J."/>
            <person name="Runnheim R."/>
            <person name="Forrest D."/>
            <person name="Amos-Landgraf J."/>
            <person name="Schwartz D.C."/>
            <person name="Cheng Z."/>
            <person name="Lindblad-Toh K."/>
            <person name="Eichler E.E."/>
            <person name="Ponting C.P."/>
        </authorList>
    </citation>
    <scope>NUCLEOTIDE SEQUENCE [LARGE SCALE GENOMIC DNA]</scope>
    <source>
        <strain>C57BL/6J</strain>
    </source>
</reference>
<reference key="6">
    <citation type="journal article" date="2004" name="Genome Res.">
        <title>The status, quality, and expansion of the NIH full-length cDNA project: the Mammalian Gene Collection (MGC).</title>
        <authorList>
            <consortium name="The MGC Project Team"/>
        </authorList>
    </citation>
    <scope>NUCLEOTIDE SEQUENCE [LARGE SCALE MRNA] (ISOFORMS 1 AND 4)</scope>
</reference>
<reference key="7">
    <citation type="journal article" date="2006" name="Immunity">
        <title>Critical role for NALP3/CIAS1/Cryopyrin in innate and adaptive immunity through its regulation of caspase-1.</title>
        <authorList>
            <person name="Sutterwala F.S."/>
            <person name="Ogura Y."/>
            <person name="Szczepanik M."/>
            <person name="Lara-Tejero M."/>
            <person name="Lichtenberger G.S."/>
            <person name="Grant E.P."/>
            <person name="Bertin J."/>
            <person name="Coyle A.J."/>
            <person name="Galan J.E."/>
            <person name="Askenase P.W."/>
            <person name="Flavell R.A."/>
        </authorList>
    </citation>
    <scope>FUNCTION</scope>
    <scope>TISSUE SPECIFICITY</scope>
    <scope>INDUCTION BY LPS</scope>
    <scope>DEVELOPMENTAL STAGE</scope>
    <scope>DISRUPTION PHENOTYPE</scope>
</reference>
<reference key="8">
    <citation type="journal article" date="2006" name="J. Biol. Chem.">
        <title>Critical role for cryopyrin/Nalp3 in activation of caspase-1 in response to viral infection and double-stranded RNA.</title>
        <authorList>
            <person name="Kanneganti T.-D."/>
            <person name="Body-Malapel M."/>
            <person name="Amer A."/>
            <person name="Park J.-H."/>
            <person name="Whitfield J."/>
            <person name="Franchi L."/>
            <person name="Taraporewala Z.F."/>
            <person name="Miller D."/>
            <person name="Patton J.T."/>
            <person name="Inohara N."/>
            <person name="Nunez G."/>
        </authorList>
    </citation>
    <scope>FUNCTION</scope>
</reference>
<reference key="9">
    <citation type="journal article" date="2006" name="Nature">
        <title>Cryopyrin activates the inflammasome in response to toxins and ATP.</title>
        <authorList>
            <person name="Mariathasan S."/>
            <person name="Weiss D.S."/>
            <person name="Newton K."/>
            <person name="McBride J."/>
            <person name="O'Rourke K."/>
            <person name="Roose-Girma M."/>
            <person name="Lee W.P."/>
            <person name="Weinrauch Y."/>
            <person name="Monack D.M."/>
            <person name="Dixit V.M."/>
        </authorList>
    </citation>
    <scope>FUNCTION</scope>
    <scope>DISRUPTION PHENOTYPE</scope>
</reference>
<reference key="10">
    <citation type="journal article" date="2006" name="Nature">
        <title>Bacterial RNA and small antiviral compounds activate caspase-1 through cryopyrin/Nalp3.</title>
        <authorList>
            <person name="Kanneganti T.-D."/>
            <person name="Oezoeren N."/>
            <person name="Body-Malapel M."/>
            <person name="Amer A."/>
            <person name="Park J.-H."/>
            <person name="Franchi L."/>
            <person name="Whitfield J."/>
            <person name="Barchet W."/>
            <person name="Colonna M."/>
            <person name="Vandenabeele P."/>
            <person name="Bertin J."/>
            <person name="Coyle A."/>
            <person name="Grant E.P."/>
            <person name="Akira S."/>
            <person name="Nunez G."/>
        </authorList>
    </citation>
    <scope>FUNCTION</scope>
    <scope>DISRUPTION PHENOTYPE</scope>
</reference>
<reference key="11">
    <citation type="journal article" date="2006" name="Nature">
        <title>Gout-associated uric acid crystals activate the NALP3 inflammasome.</title>
        <authorList>
            <person name="Martinon F."/>
            <person name="Petrilli V."/>
            <person name="Mayor A."/>
            <person name="Tardivel A."/>
            <person name="Tschopp J."/>
        </authorList>
    </citation>
    <scope>FUNCTION</scope>
    <scope>ACTIVITY REGULATION</scope>
</reference>
<reference key="12">
    <citation type="journal article" date="2008" name="J. Bone Miner. Res.">
        <title>Osteoblasts express NLRP3, a nucleotide-binding domain and leucine-rich repeat region containing receptor implicated in bacterially induced cell death.</title>
        <authorList>
            <person name="McCall S.H."/>
            <person name="Sahraei M."/>
            <person name="Young A.B."/>
            <person name="Worley C.S."/>
            <person name="Duncan J.A."/>
            <person name="Ting J.P."/>
            <person name="Marriott I."/>
        </authorList>
    </citation>
    <scope>TISSUE SPECIFICITY</scope>
    <scope>INDUCTION BY SALMONELLA</scope>
    <scope>INTERACTION WITH PYCARD</scope>
</reference>
<reference key="13">
    <citation type="journal article" date="2008" name="Science">
        <title>Innate immune activation through Nalp3 inflammasome sensing of asbestos and silica.</title>
        <authorList>
            <person name="Dostert C."/>
            <person name="Petrilli V."/>
            <person name="Van Bruggen R."/>
            <person name="Steele C."/>
            <person name="Mossman B.T."/>
            <person name="Tschopp J."/>
        </authorList>
    </citation>
    <scope>FUNCTION</scope>
    <scope>ACTIVITY REGULATION</scope>
    <scope>DISRUPTION PHENOTYPE</scope>
</reference>
<reference key="14">
    <citation type="journal article" date="2009" name="Immunity">
        <title>The NLRP3 inflammasome mediates in vivo innate immunity to influenza A virus through recognition of viral RNA.</title>
        <authorList>
            <person name="Allen I.C."/>
            <person name="Scull M.A."/>
            <person name="Moore C.B."/>
            <person name="Holl E.K."/>
            <person name="McElvania-TeKippe E."/>
            <person name="Taxman D.J."/>
            <person name="Guthrie E.H."/>
            <person name="Pickles R.J."/>
            <person name="Ting J.P."/>
        </authorList>
    </citation>
    <scope>FUNCTION</scope>
    <scope>ACTIVITY REGULATION</scope>
</reference>
<reference key="15">
    <citation type="journal article" date="2010" name="J. Immunol.">
        <title>Inflammasome-dependent release of the alarmin HMGB1 in endotoxemia.</title>
        <authorList>
            <person name="Lamkanfi M."/>
            <person name="Sarkar A."/>
            <person name="Vande Walle L."/>
            <person name="Vitari A.C."/>
            <person name="Amer A.O."/>
            <person name="Wewers M.D."/>
            <person name="Tracey K.J."/>
            <person name="Kanneganti T.D."/>
            <person name="Dixit V.M."/>
        </authorList>
    </citation>
    <scope>FUNCTION</scope>
</reference>
<reference key="16">
    <citation type="journal article" date="2012" name="J. Biol. Chem.">
        <title>Non-transcriptional priming and deubiquitination regulate NLRP3 inflammasome activation.</title>
        <authorList>
            <person name="Juliana C."/>
            <person name="Fernandes-Alnemri T."/>
            <person name="Kang S."/>
            <person name="Farias A."/>
            <person name="Qin F."/>
            <person name="Alnemri E.S."/>
        </authorList>
    </citation>
    <scope>UBIQUITINATION</scope>
    <scope>DEUBIQUITINATION</scope>
</reference>
<reference key="17">
    <citation type="journal article" date="2012" name="Nature">
        <title>The calcium-sensing receptor regulates the NLRP3 inflammasome through Ca2+ and cAMP.</title>
        <authorList>
            <person name="Lee G.S."/>
            <person name="Subramanian N."/>
            <person name="Kim A.I."/>
            <person name="Aksentijevich I."/>
            <person name="Goldbach-Mansky R."/>
            <person name="Sacks D.B."/>
            <person name="Germain R.N."/>
            <person name="Kastner D.L."/>
            <person name="Chae J.J."/>
        </authorList>
    </citation>
    <scope>ACTIVITY REGULATION</scope>
</reference>
<reference key="18">
    <citation type="journal article" date="2012" name="Nature">
        <title>Novel role of PKR in inflammasome activation and HMGB1 release.</title>
        <authorList>
            <person name="Lu B."/>
            <person name="Nakamura T."/>
            <person name="Inouye K."/>
            <person name="Li J."/>
            <person name="Tang Y."/>
            <person name="Lundbaeck P."/>
            <person name="Valdes-Ferrer S.I."/>
            <person name="Olofsson P.S."/>
            <person name="Kalb T."/>
            <person name="Roth J."/>
            <person name="Zou Y."/>
            <person name="Erlandsson-Harris H."/>
            <person name="Yang H."/>
            <person name="Ting J.P."/>
            <person name="Wang H."/>
            <person name="Andersson U."/>
            <person name="Antoine D.J."/>
            <person name="Chavan S.S."/>
            <person name="Hotamisligil G.S."/>
            <person name="Tracey K.J."/>
        </authorList>
    </citation>
    <scope>FUNCTION</scope>
    <scope>INTERACTION WITH EIF2AK2</scope>
</reference>
<reference key="19">
    <citation type="journal article" date="2013" name="Immunity">
        <title>K+ efflux is the common trigger of NLRP3 inflammasome activation by bacterial toxins and particulate matter.</title>
        <authorList>
            <person name="Munoz-Planillo R."/>
            <person name="Kuffa P."/>
            <person name="Martinez-Colon G."/>
            <person name="Smith B.L."/>
            <person name="Rajendiran T.M."/>
            <person name="Nunez G."/>
        </authorList>
    </citation>
    <scope>FUNCTION</scope>
    <scope>ACTIVITY REGULATION</scope>
</reference>
<reference key="20">
    <citation type="journal article" date="2013" name="Immunity">
        <title>Omega-3 fatty acids prevent inflammation and metabolic disorder through inhibition of NLRP3 inflammasome activation.</title>
        <authorList>
            <person name="Yan Y."/>
            <person name="Jiang W."/>
            <person name="Spinetti T."/>
            <person name="Tardivel A."/>
            <person name="Castillo R."/>
            <person name="Bourquin C."/>
            <person name="Guarda G."/>
            <person name="Tian Z."/>
            <person name="Tschopp J."/>
            <person name="Zhou R."/>
        </authorList>
    </citation>
    <scope>DISRUPTION PHENOTYPE</scope>
</reference>
<reference key="21">
    <citation type="journal article" date="2013" name="Mol. Cell">
        <title>Deubiquitination of NLRP3 by BRCC3 critically regulates inflammasome activity.</title>
        <authorList>
            <person name="Py B.F."/>
            <person name="Kim M.S."/>
            <person name="Vakifahmetoglu-Norberg H."/>
            <person name="Yuan J."/>
        </authorList>
    </citation>
    <scope>UBIQUITINATION</scope>
    <scope>DEUBIQUITINATION BY BRCC3</scope>
</reference>
<reference key="22">
    <citation type="journal article" date="2013" name="Cell">
        <title>The adaptor MAVS promotes NLRP3 mitochondrial localization and inflammasome activation.</title>
        <authorList>
            <person name="Subramanian N."/>
            <person name="Natarajan K."/>
            <person name="Clatworthy M.R."/>
            <person name="Wang Z."/>
            <person name="Germain R.N."/>
        </authorList>
    </citation>
    <scope>FUNCTION</scope>
    <scope>SUBCELLULAR LOCATION</scope>
    <scope>INTERACTION WITH MAVS</scope>
</reference>
<reference key="23">
    <citation type="journal article" date="2013" name="Nat. Immunol.">
        <title>Microtubule-driven spatial arrangement of mitochondria promotes activation of the NLRP3 inflammasome.</title>
        <authorList>
            <person name="Misawa T."/>
            <person name="Takahama M."/>
            <person name="Kozaki T."/>
            <person name="Lee H."/>
            <person name="Zou J."/>
            <person name="Saitoh T."/>
            <person name="Akira S."/>
        </authorList>
    </citation>
    <scope>SUBCELLULAR LOCATION</scope>
</reference>
<reference key="24">
    <citation type="journal article" date="2014" name="Cell">
        <title>Prion-like polymerization underlies signal transduction in antiviral immune defense and inflammasome activation.</title>
        <authorList>
            <person name="Cai X."/>
            <person name="Chen J."/>
            <person name="Xu H."/>
            <person name="Liu S."/>
            <person name="Jiang Q.X."/>
            <person name="Halfmann R."/>
            <person name="Chen Z.J."/>
        </authorList>
    </citation>
    <scope>ACTIVITY REGULATION</scope>
    <scope>MECHANISM OF INFLAMMASOME ASSEMBLY</scope>
</reference>
<reference key="25">
    <citation type="journal article" date="2014" name="Nat. Immunol.">
        <title>The adaptor ASC has extracellular and 'prionoid' activities that propagate inflammation.</title>
        <authorList>
            <person name="Franklin B.S."/>
            <person name="Bossaller L."/>
            <person name="De Nardo D."/>
            <person name="Ratter J.M."/>
            <person name="Stutz A."/>
            <person name="Engels G."/>
            <person name="Brenker C."/>
            <person name="Nordhoff M."/>
            <person name="Mirandola S.R."/>
            <person name="Al-Amoudi A."/>
            <person name="Mangan M.S."/>
            <person name="Zimmer S."/>
            <person name="Monks B.G."/>
            <person name="Fricke M."/>
            <person name="Schmidt R.E."/>
            <person name="Espevik T."/>
            <person name="Jones B."/>
            <person name="Jarnicki A.G."/>
            <person name="Hansbro P.M."/>
            <person name="Busto P."/>
            <person name="Marshak-Rothstein A."/>
            <person name="Hornemann S."/>
            <person name="Aguzzi A."/>
            <person name="Kastenmuller W."/>
            <person name="Latz E."/>
        </authorList>
    </citation>
    <scope>SUBCELLULAR LOCATION</scope>
    <scope>SECRETION OF INFLAMMASOME POLYMERS</scope>
</reference>
<reference key="26">
    <citation type="journal article" date="2014" name="Nat. Immunol.">
        <title>The NLRP3 inflammasome is released as a particulate danger signal that amplifies the inflammatory response.</title>
        <authorList>
            <person name="Baroja-Mazo A."/>
            <person name="Martin-Sanchez F."/>
            <person name="Gomez A.I."/>
            <person name="Martinez C.M."/>
            <person name="Amores-Iniesta J."/>
            <person name="Compan V."/>
            <person name="Barbera-Cremades M."/>
            <person name="Yaguee J."/>
            <person name="Ruiz-Ortiz E."/>
            <person name="Anton J."/>
            <person name="Bujan S."/>
            <person name="Couillin I."/>
            <person name="Brough D."/>
            <person name="Arostegui J.I."/>
            <person name="Pelegrin P."/>
        </authorList>
    </citation>
    <scope>SUBCELLULAR LOCATION</scope>
</reference>
<reference key="27">
    <citation type="journal article" date="2015" name="Nat. Immunol.">
        <title>The receptor NLRP3 is a transcriptional regulator of TH2 differentiation.</title>
        <authorList>
            <person name="Bruchard M."/>
            <person name="Rebe C."/>
            <person name="Derangere V."/>
            <person name="Togbe D."/>
            <person name="Ryffel B."/>
            <person name="Boidot R."/>
            <person name="Humblin E."/>
            <person name="Hamman A."/>
            <person name="Chalmin F."/>
            <person name="Berger H."/>
            <person name="Chevriaux A."/>
            <person name="Limagne E."/>
            <person name="Apetoh L."/>
            <person name="Vegran F."/>
            <person name="Ghiringhelli F."/>
        </authorList>
    </citation>
    <scope>FUNCTION IN TH2 CELLS</scope>
    <scope>INTERACTION WITH IRF4</scope>
    <scope>SUBCELLULAR LOCATION</scope>
    <scope>INDUCTION BY IL2</scope>
    <scope>TISSUE SPECIFICITY</scope>
    <scope>DEVELOPMENTAL STAGE</scope>
    <scope>DOMAIN LRR</scope>
    <scope>DISRUPTION PHENOTYPE</scope>
</reference>
<reference key="28">
    <citation type="journal article" date="2016" name="Cell">
        <title>Hexokinase is an innate immune receptor for the detection of bacterial peptidoglycan.</title>
        <authorList>
            <person name="Wolf A.J."/>
            <person name="Reyes C.N."/>
            <person name="Liang W."/>
            <person name="Becker C."/>
            <person name="Shimada K."/>
            <person name="Wheeler M.L."/>
            <person name="Cho H.C."/>
            <person name="Popescu N.I."/>
            <person name="Coggeshall K.M."/>
            <person name="Arditi M."/>
            <person name="Underhill D.M."/>
        </authorList>
    </citation>
    <scope>FUNCTION</scope>
</reference>
<reference key="29">
    <citation type="journal article" date="2016" name="J. Clin. Invest.">
        <title>NLRP3 tyrosine phosphorylation is controlled by protein tyrosine phosphatase PTPN22.</title>
        <authorList>
            <person name="Spalinger M.R."/>
            <person name="Kasper S."/>
            <person name="Gottier C."/>
            <person name="Lang S."/>
            <person name="Atrott K."/>
            <person name="Vavricka S.R."/>
            <person name="Scharl S."/>
            <person name="Raselli T."/>
            <person name="Frey-Wagner I."/>
            <person name="Gutte P.M."/>
            <person name="Gruetter M.G."/>
            <person name="Beer H.D."/>
            <person name="Contassot E."/>
            <person name="Chan A.C."/>
            <person name="Dai X."/>
            <person name="Rawlings D.J."/>
            <person name="Mair F."/>
            <person name="Becher B."/>
            <person name="Falk W."/>
            <person name="Fried M."/>
            <person name="Rogler G."/>
            <person name="Scharl M."/>
        </authorList>
    </citation>
    <scope>PHOSPHORYLATION</scope>
</reference>
<reference key="30">
    <citation type="journal article" date="2016" name="Nature">
        <title>NEK7 is an essential mediator of NLRP3 activation downstream of potassium efflux.</title>
        <authorList>
            <person name="He Y."/>
            <person name="Zeng M.Y."/>
            <person name="Yang D."/>
            <person name="Motro B."/>
            <person name="Nunez G."/>
        </authorList>
    </citation>
    <scope>FUNCTION</scope>
    <scope>ACTIVITY REGULATION</scope>
    <scope>INTERACTION WITH NEK7</scope>
    <scope>DOMAIN LRR</scope>
</reference>
<reference key="31">
    <citation type="journal article" date="2016" name="Nat. Commun.">
        <title>The E3 ubiquitin ligase TRIM31 attenuates NLRP3 inflammasome activation by promoting proteasomal degradation of NLRP3.</title>
        <authorList>
            <person name="Song H."/>
            <person name="Liu B."/>
            <person name="Huai W."/>
            <person name="Yu Z."/>
            <person name="Wang W."/>
            <person name="Zhao J."/>
            <person name="Han L."/>
            <person name="Jiang G."/>
            <person name="Zhang L."/>
            <person name="Gao C."/>
            <person name="Zhao W."/>
        </authorList>
    </citation>
    <scope>FUNCTION</scope>
    <scope>UBIQUITINATION</scope>
</reference>
<reference key="32">
    <citation type="journal article" date="2016" name="Nat. Immunol.">
        <title>NLRP3 activation and mitosis are mutually exclusive events coordinated by NEK7, a new inflammasome component.</title>
        <authorList>
            <person name="Shi H."/>
            <person name="Wang Y."/>
            <person name="Li X."/>
            <person name="Zhan X."/>
            <person name="Tang M."/>
            <person name="Fina M."/>
            <person name="Su L."/>
            <person name="Pratt D."/>
            <person name="Bu C.H."/>
            <person name="Hildebrand S."/>
            <person name="Lyon S."/>
            <person name="Scott L."/>
            <person name="Quan J."/>
            <person name="Sun Q."/>
            <person name="Russell J."/>
            <person name="Arnett S."/>
            <person name="Jurek P."/>
            <person name="Chen D."/>
            <person name="Kravchenko V.V."/>
            <person name="Mathison J.C."/>
            <person name="Moresco E.M."/>
            <person name="Monson N.L."/>
            <person name="Ulevitch R.J."/>
            <person name="Beutler B."/>
        </authorList>
    </citation>
    <scope>FUNCTION</scope>
    <scope>INTERACTION WITH NEK7</scope>
    <scope>DOMAIN LRR</scope>
    <scope>MUTAGENESIS OF GLY-754</scope>
</reference>
<reference key="33">
    <citation type="journal article" date="2017" name="Proc. Natl. Acad. Sci. U.S.A.">
        <title>mutation and cochlear autoinflammation cause syndromic and nonsyndromic hearing loss DFNA34 responsive to anakinra therapy.</title>
        <authorList>
            <person name="Nakanishi H."/>
            <person name="Kawashima Y."/>
            <person name="Kurima K."/>
            <person name="Chae J.J."/>
            <person name="Ross A.M."/>
            <person name="Pinto-Patarroyo G."/>
            <person name="Patel S.K."/>
            <person name="Muskett J.A."/>
            <person name="Ratay J.S."/>
            <person name="Chattaraj P."/>
            <person name="Park Y.H."/>
            <person name="Grevich S."/>
            <person name="Brewer C.C."/>
            <person name="Hoa M."/>
            <person name="Kim H.J."/>
            <person name="Butman J.A."/>
            <person name="Broderick L."/>
            <person name="Hoffman H.M."/>
            <person name="Aksentijevich I."/>
            <person name="Kastner D.L."/>
            <person name="Goldbach-Mansky R."/>
            <person name="Griffith A.J."/>
        </authorList>
    </citation>
    <scope>FUNCTION</scope>
    <scope>TISSUE SPECIFICITY</scope>
</reference>
<reference key="34">
    <citation type="journal article" date="2016" name="J. Biol. Chem.">
        <title>A Genome-wide CRISPR (clustered regularly interspaced short palindromic repeats) screen identifies NEK7 as an essential component of NLRP3 Inflammasome activation.</title>
        <authorList>
            <person name="Schmid-Burgk J.L."/>
            <person name="Chauhan D."/>
            <person name="Schmidt T."/>
            <person name="Ebert T.S."/>
            <person name="Reinhardt J."/>
            <person name="Endl E."/>
            <person name="Hornung V."/>
        </authorList>
    </citation>
    <scope>INTERACTION WITH NEK7</scope>
</reference>
<reference key="35">
    <citation type="journal article" date="2017" name="J. Exp. Med.">
        <title>NLRP3 inflammasome assembly is regulated by phosphorylation of the pyrin domain.</title>
        <authorList>
            <person name="Stutz A."/>
            <person name="Kolbe C.C."/>
            <person name="Stahl R."/>
            <person name="Horvath G.L."/>
            <person name="Franklin B.S."/>
            <person name="van Ray O."/>
            <person name="Brinkschulte R."/>
            <person name="Geyer M."/>
            <person name="Meissner F."/>
            <person name="Latz E."/>
        </authorList>
    </citation>
    <scope>PHOSPHORYLATION AT SER-3; SER-157 AND SER-725</scope>
</reference>
<reference key="36">
    <citation type="journal article" date="2017" name="J. Exp. Med.">
        <title>Protein kinase D at the Golgi controls NLRP3 inflammasome activation.</title>
        <authorList>
            <person name="Zhang Z."/>
            <person name="Meszaros G."/>
            <person name="He W.T."/>
            <person name="Xu Y."/>
            <person name="de Fatima Magliarelli H."/>
            <person name="Mailly L."/>
            <person name="Mihlan M."/>
            <person name="Liu Y."/>
            <person name="Puig Gamez M."/>
            <person name="Goginashvili A."/>
            <person name="Pasquier A."/>
            <person name="Bielska O."/>
            <person name="Neven B."/>
            <person name="Quartier P."/>
            <person name="Aebersold R."/>
            <person name="Baumert T.F."/>
            <person name="Georgel P."/>
            <person name="Han J."/>
            <person name="Ricci R."/>
        </authorList>
    </citation>
    <scope>ACTIVITY REGULATION</scope>
    <scope>SUBCELLULAR LOCATION</scope>
    <scope>PHOSPHORYLATION AT SER-291</scope>
    <scope>MUTAGENESIS OF SER-291</scope>
</reference>
<reference key="37">
    <citation type="journal article" date="2017" name="Mol. Cell">
        <title>NLRP3 phosphorylation is an essential priming event for inflammasome activation.</title>
        <authorList>
            <person name="Song N."/>
            <person name="Liu Z.S."/>
            <person name="Xue W."/>
            <person name="Bai Z.F."/>
            <person name="Wang Q.Y."/>
            <person name="Dai J."/>
            <person name="Liu X."/>
            <person name="Huang Y.J."/>
            <person name="Cai H."/>
            <person name="Zhan X.Y."/>
            <person name="Han Q.Y."/>
            <person name="Wang H."/>
            <person name="Chen Y."/>
            <person name="Li H.Y."/>
            <person name="Li A.L."/>
            <person name="Zhang X.M."/>
            <person name="Zhou T."/>
            <person name="Li T."/>
        </authorList>
    </citation>
    <scope>PHOSPHORYLATION AT SER-194</scope>
    <scope>MUTAGENESIS OF SER-194</scope>
</reference>
<reference key="38">
    <citation type="journal article" date="2017" name="Nat. Commun.">
        <title>MARK4 regulates NLRP3 positioning and inflammasome activation through a microtubule-dependent mechanism.</title>
        <authorList>
            <person name="Li X."/>
            <person name="Thome S."/>
            <person name="Ma X."/>
            <person name="Amrute-Nayak M."/>
            <person name="Finigan A."/>
            <person name="Kitt L."/>
            <person name="Masters L."/>
            <person name="James J.R."/>
            <person name="Shi Y."/>
            <person name="Meng G."/>
            <person name="Mallat Z."/>
        </authorList>
    </citation>
    <scope>FUNCTION</scope>
    <scope>SUBCELLULAR LOCATION</scope>
    <scope>INTERACTION WITH MARK4</scope>
</reference>
<reference key="39">
    <citation type="journal article" date="2018" name="Nature">
        <title>PtdIns4P on dispersed trans-Golgi network mediates NLRP3 inflammasome activation.</title>
        <authorList>
            <person name="Chen J."/>
            <person name="Chen Z.J."/>
        </authorList>
    </citation>
    <scope>FUNCTION</scope>
    <scope>ACTIVITY REGULATION</scope>
    <scope>SUBCELLULAR LOCATION</scope>
    <scope>INTERACTION WITH PYCARD</scope>
    <scope>MUTAGENESIS OF 127-LYS--LYS-130</scope>
</reference>
<reference key="40">
    <citation type="journal article" date="2018" name="Nat. Commun.">
        <title>NLRP3 lacking the leucine-rich repeat domain can be fully activated via the canonical inflammasome pathway.</title>
        <authorList>
            <person name="Hafner-Bratkovic I."/>
            <person name="Susjan P."/>
            <person name="Lainscek D."/>
            <person name="Tapia-Abellan A."/>
            <person name="Cerovic K."/>
            <person name="Kadunc L."/>
            <person name="Angosto-Bazarra D."/>
            <person name="Pelegrin P."/>
            <person name="Jerala R."/>
        </authorList>
    </citation>
    <scope>FUNCTION</scope>
    <scope>ACTIVITY REGULATION</scope>
</reference>
<reference key="41">
    <citation type="journal article" date="2019" name="Nature">
        <title>DDX3X acts as a live-or-die checkpoint in stressed cells by regulating NLRP3 inflammasome.</title>
        <authorList>
            <person name="Samir P."/>
            <person name="Kesavardhana S."/>
            <person name="Patmore D.M."/>
            <person name="Gingras S."/>
            <person name="Malireddi R.K.S."/>
            <person name="Karki R."/>
            <person name="Guy C.S."/>
            <person name="Briard B."/>
            <person name="Place D.E."/>
            <person name="Bhattacharya A."/>
            <person name="Sharma B.R."/>
            <person name="Nourse A."/>
            <person name="King S.V."/>
            <person name="Pitre A."/>
            <person name="Burton A.R."/>
            <person name="Pelletier S."/>
            <person name="Gilbertson R.J."/>
            <person name="Kanneganti T.D."/>
        </authorList>
    </citation>
    <scope>INTERACTION WITH DDX3X</scope>
</reference>
<reference key="42">
    <citation type="journal article" date="2021" name="J. Exp. Med.">
        <title>BTK operates a phospho-tyrosine switch to regulate NLRP3 inflammasome activity.</title>
        <authorList>
            <person name="Bittner Z.A."/>
            <person name="Liu X."/>
            <person name="Mateo Tortola M."/>
            <person name="Tapia-Abellan A."/>
            <person name="Shankar S."/>
            <person name="Andreeva L."/>
            <person name="Mangan M."/>
            <person name="Spalinger M."/>
            <person name="Kalbacher H."/>
            <person name="Duewell P."/>
            <person name="Lovotti M."/>
            <person name="Bosch K."/>
            <person name="Dickhoefer S."/>
            <person name="Marcu A."/>
            <person name="Stevanovic S."/>
            <person name="Herster F."/>
            <person name="Cardona Gloria Y."/>
            <person name="Chang T.H."/>
            <person name="Bork F."/>
            <person name="Greve C.L."/>
            <person name="Loeffler M.W."/>
            <person name="Wolz O.O."/>
            <person name="Schilling N.A."/>
            <person name="Kuemmerle-Deschner J.B."/>
            <person name="Wagner S."/>
            <person name="Delor A."/>
            <person name="Grimbacher B."/>
            <person name="Hantschel O."/>
            <person name="Scharl M."/>
            <person name="Wu H."/>
            <person name="Latz E."/>
            <person name="Weber A.N.R."/>
        </authorList>
    </citation>
    <scope>PHOSPHORYLATION AT TYR-132; TYR-136; TYR-145 AND TYR-164</scope>
</reference>
<reference key="43">
    <citation type="journal article" date="2021" name="Nat. Commun.">
        <title>SARS-CoV-2 N protein promotes NLRP3 inflammasome activation to induce hyperinflammation.</title>
        <authorList>
            <person name="Pan P."/>
            <person name="Shen M."/>
            <person name="Yu Z."/>
            <person name="Ge W."/>
            <person name="Chen K."/>
            <person name="Tian M."/>
            <person name="Xiao F."/>
            <person name="Wang Z."/>
            <person name="Wang J."/>
            <person name="Jia Y."/>
            <person name="Wang W."/>
            <person name="Wan P."/>
            <person name="Zhang J."/>
            <person name="Chen W."/>
            <person name="Lei Z."/>
            <person name="Chen X."/>
            <person name="Luo Z."/>
            <person name="Zhang Q."/>
            <person name="Xu M."/>
            <person name="Li G."/>
            <person name="Li Y."/>
            <person name="Wu J."/>
        </authorList>
    </citation>
    <scope>DISRUPTION PHENOTYPE</scope>
</reference>
<reference key="44">
    <citation type="journal article" date="2021" name="Nat. Commun.">
        <title>NLRP3 phosphorylation in its LRR domain critically regulates inflammasome assembly.</title>
        <authorList>
            <person name="Niu T."/>
            <person name="De Rosny C."/>
            <person name="Chautard S."/>
            <person name="Rey A."/>
            <person name="Patoli D."/>
            <person name="Groslambert M."/>
            <person name="Cosson C."/>
            <person name="Lagrange B."/>
            <person name="Zhang Z."/>
            <person name="Visvikis O."/>
            <person name="Hacot S."/>
            <person name="Hologne M."/>
            <person name="Walker O."/>
            <person name="Wong J."/>
            <person name="Wang P."/>
            <person name="Ricci R."/>
            <person name="Henry T."/>
            <person name="Boyer L."/>
            <person name="Petrilli V."/>
            <person name="Py B.F."/>
        </authorList>
    </citation>
    <scope>FUNCTION</scope>
    <scope>ACTIVITY REGULATION</scope>
    <scope>INTERACTION WITH NEK7</scope>
    <scope>PHOSPHORYLATION AT SER-803</scope>
    <scope>MUTAGENESIS OF SER-803</scope>
</reference>
<reference key="45">
    <citation type="journal article" date="2022" name="EMBO Rep.">
        <title>TRIM50 promotes NLRP3 inflammasome activation by directly inducing NLRP3 oligomerization.</title>
        <authorList>
            <person name="Lin Y."/>
            <person name="Lv X."/>
            <person name="Sun C."/>
            <person name="Sun Y."/>
            <person name="Yang M."/>
            <person name="Ma D."/>
            <person name="Jing W."/>
            <person name="Zhao Y."/>
            <person name="Cheng Y."/>
            <person name="Xuan H."/>
            <person name="Han L."/>
        </authorList>
    </citation>
    <scope>FUNCTION</scope>
    <scope>SUBCELLULAR LOCATION</scope>
    <scope>INTERACTION WITH TRIM50</scope>
</reference>
<reference key="46">
    <citation type="journal article" date="2023" name="Immunity">
        <title>The orphan receptor Nur77 binds cytoplasmic LPS to activate the non-canonical NLRP3 inflammasome.</title>
        <authorList>
            <person name="Zhu F."/>
            <person name="Ma J."/>
            <person name="Li W."/>
            <person name="Liu Q."/>
            <person name="Qin X."/>
            <person name="Qian Y."/>
            <person name="Wang C."/>
            <person name="Zhang Y."/>
            <person name="Li Y."/>
            <person name="Jiang D."/>
            <person name="Wang S."/>
            <person name="Xia P."/>
        </authorList>
    </citation>
    <scope>FUNCTION</scope>
    <scope>INTERACTION WITH NR4A1 AND NEK7</scope>
    <scope>DOMAIN LRR</scope>
    <scope>DISRUPTION PHENOTYPE</scope>
</reference>
<reference key="47">
    <citation type="journal article" date="2024" name="Mol. Cell">
        <title>Consecutive palmitoylation and phosphorylation orchestrates NLRP3 membrane trafficking and inflammasome activation.</title>
        <authorList>
            <person name="Nie L."/>
            <person name="Fei C."/>
            <person name="Fan Y."/>
            <person name="Dang F."/>
            <person name="Zhao Z."/>
            <person name="Zhu T."/>
            <person name="Wu X."/>
            <person name="Dai T."/>
            <person name="Balasubramanian A."/>
            <person name="Pan J."/>
            <person name="Hu Y."/>
            <person name="Luo H.R."/>
            <person name="Wei W."/>
            <person name="Chen J."/>
        </authorList>
    </citation>
    <scope>PALMITOYLATION AT CYS-126 AND CYS-955</scope>
    <scope>MUTAGENESIS OF CYS-126 AND CYS-955</scope>
</reference>
<reference evidence="59" key="48">
    <citation type="journal article" date="2021" name="Cell">
        <title>NLRP3 cages revealed by full-length mouse NLRP3 structure control pathway activation.</title>
        <authorList>
            <person name="Andreeva L."/>
            <person name="David L."/>
            <person name="Rawson S."/>
            <person name="Shen C."/>
            <person name="Pasricha T."/>
            <person name="Pelegrin P."/>
            <person name="Wu H."/>
        </authorList>
    </citation>
    <scope>STRUCTURE BY ELECTRON MICROSCOPY (4.20 ANGSTROMS)</scope>
    <scope>FUNCTION</scope>
    <scope>CATALYTIC ACTIVITY</scope>
    <scope>ACTIVITY REGULATION</scope>
    <scope>SUBUNIT</scope>
    <scope>SUBCELLULAR LOCATION</scope>
    <scope>MUTAGENESIS OF 127-LYS--ARG-143; 771-ARG--ARG-776; 781-HIS--PHE-785; 809-ASP--ARG-813; TRP-830; TYR-858; LYS-970; GLN-1001; 1008-ASN--ARG-1013 AND PHE-1029</scope>
</reference>
<reference evidence="60" key="49">
    <citation type="journal article" date="2022" name="Proc. Natl. Acad. Sci. U.S.A.">
        <title>Structural basis for the oligomerization-mediated regulation of NLRP3 inflammasome activation.</title>
        <authorList>
            <person name="Ohto U."/>
            <person name="Kamitsukasa Y."/>
            <person name="Ishida H."/>
            <person name="Zhang Z."/>
            <person name="Murakami K."/>
            <person name="Hirama C."/>
            <person name="Maekawa S."/>
            <person name="Shimizu T."/>
        </authorList>
    </citation>
    <scope>STRUCTURE BY ELECTRON MICROSCOPY (3.55 ANGSTROMS) IN COMPLEX WITH ADP AND INHIBITOR MCC950</scope>
    <scope>SUBUNIT</scope>
    <scope>ACTIVITY REGULATION</scope>
</reference>
<evidence type="ECO:0000250" key="1">
    <source>
        <dbReference type="UniProtKB" id="Q96P20"/>
    </source>
</evidence>
<evidence type="ECO:0000255" key="2"/>
<evidence type="ECO:0000255" key="3">
    <source>
        <dbReference type="PROSITE-ProRule" id="PRU00061"/>
    </source>
</evidence>
<evidence type="ECO:0000255" key="4">
    <source>
        <dbReference type="PROSITE-ProRule" id="PRU00136"/>
    </source>
</evidence>
<evidence type="ECO:0000269" key="5">
    <source>
    </source>
</evidence>
<evidence type="ECO:0000269" key="6">
    <source>
    </source>
</evidence>
<evidence type="ECO:0000269" key="7">
    <source>
    </source>
</evidence>
<evidence type="ECO:0000269" key="8">
    <source>
    </source>
</evidence>
<evidence type="ECO:0000269" key="9">
    <source>
    </source>
</evidence>
<evidence type="ECO:0000269" key="10">
    <source>
    </source>
</evidence>
<evidence type="ECO:0000269" key="11">
    <source>
    </source>
</evidence>
<evidence type="ECO:0000269" key="12">
    <source>
    </source>
</evidence>
<evidence type="ECO:0000269" key="13">
    <source>
    </source>
</evidence>
<evidence type="ECO:0000269" key="14">
    <source>
    </source>
</evidence>
<evidence type="ECO:0000269" key="15">
    <source>
    </source>
</evidence>
<evidence type="ECO:0000269" key="16">
    <source>
    </source>
</evidence>
<evidence type="ECO:0000269" key="17">
    <source>
    </source>
</evidence>
<evidence type="ECO:0000269" key="18">
    <source>
    </source>
</evidence>
<evidence type="ECO:0000269" key="19">
    <source>
    </source>
</evidence>
<evidence type="ECO:0000269" key="20">
    <source>
    </source>
</evidence>
<evidence type="ECO:0000269" key="21">
    <source>
    </source>
</evidence>
<evidence type="ECO:0000269" key="22">
    <source>
    </source>
</evidence>
<evidence type="ECO:0000269" key="23">
    <source>
    </source>
</evidence>
<evidence type="ECO:0000269" key="24">
    <source>
    </source>
</evidence>
<evidence type="ECO:0000269" key="25">
    <source>
    </source>
</evidence>
<evidence type="ECO:0000269" key="26">
    <source>
    </source>
</evidence>
<evidence type="ECO:0000269" key="27">
    <source>
    </source>
</evidence>
<evidence type="ECO:0000269" key="28">
    <source>
    </source>
</evidence>
<evidence type="ECO:0000269" key="29">
    <source>
    </source>
</evidence>
<evidence type="ECO:0000269" key="30">
    <source>
    </source>
</evidence>
<evidence type="ECO:0000269" key="31">
    <source>
    </source>
</evidence>
<evidence type="ECO:0000269" key="32">
    <source>
    </source>
</evidence>
<evidence type="ECO:0000269" key="33">
    <source>
    </source>
</evidence>
<evidence type="ECO:0000269" key="34">
    <source>
    </source>
</evidence>
<evidence type="ECO:0000269" key="35">
    <source>
    </source>
</evidence>
<evidence type="ECO:0000269" key="36">
    <source>
    </source>
</evidence>
<evidence type="ECO:0000269" key="37">
    <source>
    </source>
</evidence>
<evidence type="ECO:0000269" key="38">
    <source>
    </source>
</evidence>
<evidence type="ECO:0000269" key="39">
    <source>
    </source>
</evidence>
<evidence type="ECO:0000269" key="40">
    <source>
    </source>
</evidence>
<evidence type="ECO:0000269" key="41">
    <source>
    </source>
</evidence>
<evidence type="ECO:0000269" key="42">
    <source>
    </source>
</evidence>
<evidence type="ECO:0000269" key="43">
    <source>
    </source>
</evidence>
<evidence type="ECO:0000269" key="44">
    <source>
    </source>
</evidence>
<evidence type="ECO:0000269" key="45">
    <source>
    </source>
</evidence>
<evidence type="ECO:0000269" key="46">
    <source>
    </source>
</evidence>
<evidence type="ECO:0000269" key="47">
    <source>
    </source>
</evidence>
<evidence type="ECO:0000269" key="48">
    <source>
    </source>
</evidence>
<evidence type="ECO:0000303" key="49">
    <source>
    </source>
</evidence>
<evidence type="ECO:0000303" key="50">
    <source>
    </source>
</evidence>
<evidence type="ECO:0000303" key="51">
    <source>
    </source>
</evidence>
<evidence type="ECO:0000303" key="52">
    <source>
    </source>
</evidence>
<evidence type="ECO:0000303" key="53">
    <source>
    </source>
</evidence>
<evidence type="ECO:0000303" key="54">
    <source>
    </source>
</evidence>
<evidence type="ECO:0000305" key="55"/>
<evidence type="ECO:0000305" key="56">
    <source>
    </source>
</evidence>
<evidence type="ECO:0000305" key="57">
    <source>
    </source>
</evidence>
<evidence type="ECO:0000312" key="58">
    <source>
        <dbReference type="MGI" id="MGI:2653833"/>
    </source>
</evidence>
<evidence type="ECO:0007744" key="59">
    <source>
        <dbReference type="PDB" id="7LFH"/>
    </source>
</evidence>
<evidence type="ECO:0007744" key="60">
    <source>
        <dbReference type="PDB" id="7VTQ"/>
    </source>
</evidence>
<feature type="chain" id="PRO_0000080887" description="NACHT, LRR and PYD domains-containing protein 3">
    <location>
        <begin position="1"/>
        <end position="1033"/>
    </location>
</feature>
<feature type="domain" description="Pyrin" evidence="3">
    <location>
        <begin position="1"/>
        <end position="91"/>
    </location>
</feature>
<feature type="domain" description="FISNA" evidence="2">
    <location>
        <begin position="136"/>
        <end position="206"/>
    </location>
</feature>
<feature type="domain" description="NACHT" evidence="4">
    <location>
        <begin position="216"/>
        <end position="532"/>
    </location>
</feature>
<feature type="repeat" description="LRR 1">
    <location>
        <begin position="739"/>
        <end position="759"/>
    </location>
</feature>
<feature type="repeat" description="LRR 2">
    <location>
        <begin position="768"/>
        <end position="789"/>
    </location>
</feature>
<feature type="repeat" description="LRR 3">
    <location>
        <begin position="796"/>
        <end position="816"/>
    </location>
</feature>
<feature type="repeat" description="LRR 4">
    <location>
        <begin position="825"/>
        <end position="846"/>
    </location>
</feature>
<feature type="repeat" description="LRR 5">
    <location>
        <begin position="853"/>
        <end position="873"/>
    </location>
</feature>
<feature type="repeat" description="LRR 6">
    <location>
        <begin position="882"/>
        <end position="903"/>
    </location>
</feature>
<feature type="repeat" description="LRR 7">
    <location>
        <begin position="910"/>
        <end position="930"/>
    </location>
</feature>
<feature type="repeat" description="LRR 8">
    <location>
        <begin position="939"/>
        <end position="960"/>
    </location>
</feature>
<feature type="repeat" description="LRR 9">
    <location>
        <begin position="967"/>
        <end position="988"/>
    </location>
</feature>
<feature type="region of interest" description="Required for binding to phosphatidylinositol 4-phosphate (PtdIns4P)" evidence="38">
    <location>
        <begin position="127"/>
        <end position="130"/>
    </location>
</feature>
<feature type="short sequence motif" description="KFERQ-like motif 1" evidence="1">
    <location>
        <begin position="351"/>
        <end position="355"/>
    </location>
</feature>
<feature type="short sequence motif" description="KFERQ-like motif 2" evidence="1">
    <location>
        <begin position="601"/>
        <end position="605"/>
    </location>
</feature>
<feature type="short sequence motif" description="KFERQ-like motif 3" evidence="1">
    <location>
        <begin position="795"/>
        <end position="799"/>
    </location>
</feature>
<feature type="short sequence motif" description="KFERQ-like motif 4" evidence="1">
    <location>
        <begin position="988"/>
        <end position="992"/>
    </location>
</feature>
<feature type="binding site" evidence="56 60">
    <location>
        <position position="165"/>
    </location>
    <ligand>
        <name>ATP</name>
        <dbReference type="ChEBI" id="CHEBI:30616"/>
    </ligand>
</feature>
<feature type="binding site" evidence="4 56 60">
    <location>
        <begin position="222"/>
        <end position="230"/>
    </location>
    <ligand>
        <name>ATP</name>
        <dbReference type="ChEBI" id="CHEBI:30616"/>
    </ligand>
</feature>
<feature type="binding site" evidence="1">
    <location>
        <position position="518"/>
    </location>
    <ligand>
        <name>ATP</name>
        <dbReference type="ChEBI" id="CHEBI:30616"/>
    </ligand>
</feature>
<feature type="modified residue" description="Phosphoserine" evidence="33">
    <location>
        <position position="3"/>
    </location>
</feature>
<feature type="modified residue" description="Phosphotyrosine" evidence="1">
    <location>
        <position position="11"/>
    </location>
</feature>
<feature type="modified residue" description="Phosphotyrosine; by BTK" evidence="42">
    <location>
        <position position="132"/>
    </location>
</feature>
<feature type="modified residue" description="Phosphotyrosine; by BTK" evidence="42">
    <location>
        <position position="136"/>
    </location>
</feature>
<feature type="modified residue" description="Phosphotyrosine; by BTK" evidence="42">
    <location>
        <position position="145"/>
    </location>
</feature>
<feature type="modified residue" description="Phosphoserine" evidence="33">
    <location>
        <position position="157"/>
    </location>
</feature>
<feature type="modified residue" description="Phosphotyrosine; by BTK" evidence="42">
    <location>
        <position position="164"/>
    </location>
</feature>
<feature type="modified residue" description="Phosphoserine; by MAPK8" evidence="37">
    <location>
        <position position="194"/>
    </location>
</feature>
<feature type="modified residue" description="Phosphoserine" evidence="1">
    <location>
        <position position="197"/>
    </location>
</feature>
<feature type="modified residue" description="Phosphoserine" evidence="1">
    <location>
        <position position="261"/>
    </location>
</feature>
<feature type="modified residue" description="Phosphoserine; by PKD/PRKD1" evidence="35">
    <location>
        <position position="291"/>
    </location>
</feature>
<feature type="modified residue" description="Phosphoserine" evidence="1">
    <location>
        <position position="330"/>
    </location>
</feature>
<feature type="modified residue" description="Phosphoserine" evidence="33">
    <location>
        <position position="725"/>
    </location>
</feature>
<feature type="modified residue" description="Phosphoserine" evidence="1">
    <location>
        <position position="732"/>
    </location>
</feature>
<feature type="modified residue" description="Phosphoserine; by CSNK1A1" evidence="43">
    <location>
        <position position="803"/>
    </location>
</feature>
<feature type="modified residue" description="Phosphotyrosine" evidence="1">
    <location>
        <position position="858"/>
    </location>
</feature>
<feature type="modified residue" description="Phosphoserine" evidence="1">
    <location>
        <position position="1032"/>
    </location>
</feature>
<feature type="lipid moiety-binding region" description="S-palmitoyl cysteine" evidence="57">
    <location>
        <position position="126"/>
    </location>
</feature>
<feature type="lipid moiety-binding region" description="S-palmitoyl cysteine" evidence="1">
    <location>
        <position position="834"/>
    </location>
</feature>
<feature type="lipid moiety-binding region" description="S-palmitoyl cysteine" evidence="1">
    <location>
        <position position="835"/>
    </location>
</feature>
<feature type="lipid moiety-binding region" description="S-palmitoyl cysteine" evidence="1">
    <location>
        <position position="841"/>
    </location>
</feature>
<feature type="lipid moiety-binding region" description="S-palmitoyl cysteine" evidence="57">
    <location>
        <position position="955"/>
    </location>
</feature>
<feature type="disulfide bond" description="Redox-active" evidence="1">
    <location>
        <begin position="6"/>
        <end position="104"/>
    </location>
</feature>
<feature type="cross-link" description="Glycyl lysine isopeptide (Lys-Gly) (interchain with G-Cter in ubiquitin)" evidence="1">
    <location>
        <position position="320"/>
    </location>
</feature>
<feature type="cross-link" description="Glycyl lysine isopeptide (Lys-Gly) (interchain with G-Cter in ubiquitin)" evidence="1">
    <location>
        <position position="426"/>
    </location>
</feature>
<feature type="cross-link" description="Glycyl lysine isopeptide (Lys-Gly) (interchain with G-Cter in ubiquitin)" evidence="1">
    <location>
        <position position="687"/>
    </location>
</feature>
<feature type="cross-link" description="Glycyl lysine isopeptide (Lys-Gly) (interchain with G-Cter in ubiquitin)" evidence="1">
    <location>
        <position position="875"/>
    </location>
</feature>
<feature type="cross-link" description="Glycyl lysine isopeptide (Lys-Gly) (interchain with G-Cter in ubiquitin)" evidence="1">
    <location>
        <position position="970"/>
    </location>
</feature>
<feature type="splice variant" id="VSP_014925" description="In isoform 3." evidence="49">
    <location>
        <begin position="774"/>
        <end position="830"/>
    </location>
</feature>
<feature type="splice variant" id="VSP_014926" description="In isoform 4." evidence="49 51">
    <location>
        <begin position="830"/>
        <end position="1033"/>
    </location>
</feature>
<feature type="splice variant" id="VSP_014927" description="In isoform 2." evidence="49">
    <location>
        <begin position="888"/>
        <end position="944"/>
    </location>
</feature>
<feature type="mutagenesis site" description="Decreased activation of the NLRP3 inflammasome; when associated with A-955." evidence="48">
    <original>C</original>
    <variation>A</variation>
    <location>
        <position position="126"/>
    </location>
</feature>
<feature type="mutagenesis site" description="In linker-mutant; strongly reduced binding to phosphorylated phosphatidylinositides. Abolished ability to form homooligomeric double-ring cages that hide pyrin domains to avoid premature activation." evidence="44">
    <original>KKKKDYCKMYRRHVRSR</original>
    <variation>AAAADYCKMYAAHVASA</variation>
    <location>
        <begin position="127"/>
        <end position="143"/>
    </location>
</feature>
<feature type="mutagenesis site" description="In 4KA mutant; abolished binding to phosphatidylinositol 4-phosphate (PtdIns4P) and recruitment to dispersed trans-Golgi network (dTGN) vesicle membranes." evidence="38">
    <original>KKKK</original>
    <variation>AAAA</variation>
    <location>
        <begin position="127"/>
        <end position="130"/>
    </location>
</feature>
<feature type="mutagenesis site" description="Abolished phosphorylation by JNK1 leading to decreased activation of the NLRP3 inflammasome." evidence="37">
    <original>S</original>
    <variation>A</variation>
    <location>
        <position position="194"/>
    </location>
</feature>
<feature type="mutagenesis site" description="Abolished phosphorylation by PKD/PRKD1, leading to prevent NLRP3 inflammasome activation." evidence="35">
    <original>S</original>
    <variation>A</variation>
    <location>
        <position position="291"/>
    </location>
</feature>
<feature type="mutagenesis site" description="Mimics phosphorylation state; despite this, does not promote activation of the NLRP3 inflammasome." evidence="35">
    <original>S</original>
    <variation>E</variation>
    <location>
        <position position="291"/>
    </location>
</feature>
<feature type="mutagenesis site" description="Increases interaction with NEK7." evidence="28">
    <original>G</original>
    <variation>A</variation>
    <variation>R</variation>
    <location>
        <position position="754"/>
    </location>
</feature>
<feature type="mutagenesis site" description="In LRRm3 mutant; abolished ability to form homooligomeric double-ring cages that hide pyrin domains to avoid premature activation." evidence="44">
    <original>RLWLGR</original>
    <variation>ELTLGE</variation>
    <location>
        <begin position="771"/>
        <end position="776"/>
    </location>
</feature>
<feature type="mutagenesis site" description="In LRRm5 mutant; abolished ability to form homooligomeric double-ring cages that hide pyrin domains to avoid premature activation." evidence="44">
    <original>HQCCF</original>
    <variation>ERCCA</variation>
    <location>
        <begin position="781"/>
        <end position="785"/>
    </location>
</feature>
<feature type="mutagenesis site" description="Mimics phosphorylation state; impaired ability to recruit NEK7, leding to decreased activation of the NLRP3 inflammasome." evidence="43">
    <original>S</original>
    <variation>D</variation>
    <location>
        <position position="803"/>
    </location>
</feature>
<feature type="mutagenesis site" description="In LRRm4 mutant; abolished ability to form homooligomeric double-ring cages that hide pyrin domains to avoid premature activation." evidence="44">
    <original>DFGIR</original>
    <variation>RAGIE</variation>
    <location>
        <begin position="809"/>
        <end position="813"/>
    </location>
</feature>
<feature type="mutagenesis site" description="In LRRm1 mutant; abolished ability to form homooligomeric double-ring cages that hide pyrin domains to avoid premature activation; when associated with C-858." evidence="44">
    <original>W</original>
    <variation>A</variation>
    <location>
        <position position="830"/>
    </location>
</feature>
<feature type="mutagenesis site" description="In LRRm1 mutant; abolished ability to form homooligomeric double-ring cages that hide pyrin domains to avoid premature activation; when associated with A-830." evidence="44">
    <original>Y</original>
    <variation>C</variation>
    <location>
        <position position="858"/>
    </location>
</feature>
<feature type="mutagenesis site" description="Decreased activation of the NLRP3 inflammasome; when associated with A-126." evidence="48">
    <original>C</original>
    <variation>A</variation>
    <location>
        <position position="955"/>
    </location>
</feature>
<feature type="mutagenesis site" description="In LRR6 mutant; does not affect ability to form homooligomeric double-ring cages that hide pyrin domains to avoid premature activation; when associated with R-1001 and A-1029." evidence="44">
    <original>K</original>
    <variation>E</variation>
    <location>
        <position position="970"/>
    </location>
</feature>
<feature type="mutagenesis site" description="In LRR6 mutant; does not affect ability to form homooligomeric double-ring cages that hide pyrin domains to avoid premature activation; when associated with E-970 and A-1029." evidence="44">
    <original>Q</original>
    <variation>R</variation>
    <location>
        <position position="1001"/>
    </location>
</feature>
<feature type="mutagenesis site" description="In LRRm2 mutant; abolished ability to form homooligomeric double-ring cages that hide pyrin domains to avoid premature activation." evidence="44">
    <original>NRETKR</original>
    <variation>REERTKE</variation>
    <location>
        <begin position="1008"/>
        <end position="1013"/>
    </location>
</feature>
<feature type="mutagenesis site" description="In LRR6 mutant; does not affect ability to form homooligomeric double-ring cages that hide pyrin domains to avoid premature activation; when associated with E-970 and R-1001." evidence="44">
    <original>F</original>
    <variation>A</variation>
    <location>
        <position position="1029"/>
    </location>
</feature>
<feature type="sequence conflict" description="In Ref. 4; AGU01502." evidence="55" ref="4">
    <original>Q</original>
    <variation>R</variation>
    <location>
        <position position="491"/>
    </location>
</feature>
<keyword id="KW-0002">3D-structure</keyword>
<keyword id="KW-0010">Activator</keyword>
<keyword id="KW-0025">Alternative splicing</keyword>
<keyword id="KW-0067">ATP-binding</keyword>
<keyword id="KW-0963">Cytoplasm</keyword>
<keyword id="KW-0206">Cytoskeleton</keyword>
<keyword id="KW-1015">Disulfide bond</keyword>
<keyword id="KW-0256">Endoplasmic reticulum</keyword>
<keyword id="KW-0333">Golgi apparatus</keyword>
<keyword id="KW-0378">Hydrolase</keyword>
<keyword id="KW-0391">Immunity</keyword>
<keyword id="KW-1271">Inflammasome</keyword>
<keyword id="KW-0395">Inflammatory response</keyword>
<keyword id="KW-0399">Innate immunity</keyword>
<keyword id="KW-1017">Isopeptide bond</keyword>
<keyword id="KW-0433">Leucine-rich repeat</keyword>
<keyword id="KW-0449">Lipoprotein</keyword>
<keyword id="KW-0472">Membrane</keyword>
<keyword id="KW-0496">Mitochondrion</keyword>
<keyword id="KW-0547">Nucleotide-binding</keyword>
<keyword id="KW-0539">Nucleus</keyword>
<keyword id="KW-0564">Palmitate</keyword>
<keyword id="KW-0597">Phosphoprotein</keyword>
<keyword id="KW-1185">Reference proteome</keyword>
<keyword id="KW-0677">Repeat</keyword>
<keyword id="KW-0964">Secreted</keyword>
<keyword id="KW-0804">Transcription</keyword>
<keyword id="KW-0805">Transcription regulation</keyword>
<keyword id="KW-0832">Ubl conjugation</keyword>
<organism>
    <name type="scientific">Mus musculus</name>
    <name type="common">Mouse</name>
    <dbReference type="NCBI Taxonomy" id="10090"/>
    <lineage>
        <taxon>Eukaryota</taxon>
        <taxon>Metazoa</taxon>
        <taxon>Chordata</taxon>
        <taxon>Craniata</taxon>
        <taxon>Vertebrata</taxon>
        <taxon>Euteleostomi</taxon>
        <taxon>Mammalia</taxon>
        <taxon>Eutheria</taxon>
        <taxon>Euarchontoglires</taxon>
        <taxon>Glires</taxon>
        <taxon>Rodentia</taxon>
        <taxon>Myomorpha</taxon>
        <taxon>Muroidea</taxon>
        <taxon>Muridae</taxon>
        <taxon>Murinae</taxon>
        <taxon>Mus</taxon>
        <taxon>Mus</taxon>
    </lineage>
</organism>
<sequence>MTSVRCKLAQYLEDLEDVDLKKFKMHLEDYPPEKGCIPVPRGQMEKADHLDLATLMIDFNGEEKAWAMAVWIFAAINRRDLWEKAKKDQPEWNDTCTSHSSMVCQEDSLEEEWMGLLGYLSRISICKKKKDYCKMYRRHVRSRFYSIKDRNARLGESVDLNSRYTQLQLVKEHPSKQEREHELLTIGRTKMRDSPMSSLKLELLFEPEDGHSEPVHTVVFQGAAGIGKTILARKIMLDWALGKLFKDKFDYLFFIHCREVSLRTPRSLADLIVSCWPDPNPPVCKILRKPSRILFLMDGFDELQGAFDEHIGEVCTDWQKAVRGDILLSSLIRKKLLPKASLLITTRPVALEKLQHLLDHPRHVEILGFSEAKRKEYFFKYFSNELQAREAFRLIQENEVLFTMCFIPLVCWIVCTGLKQQMETGKSLAQTSKTTTAVYVFFLSSLLQSRGGIEEHLFSDYLQGLCSLAADGIWNQKILFEECDLRKHGLQKTDVSAFLRMNVFQKEVDCERFYSFSHMTFQEFFAAMYYLLEEEAEGETVRKGPGGCSDLLNRDVKVLLENYGKFEKGYLIFVVRFLFGLVNQERTSYLEKKLSCKISQQVRLELLKWIEVKAKAKKLQWQPSQLELFYCLYEMQEEDFVQSAMDHFPKIEINLSTRMDHVVSSFCIKNCHRVKTLSLGFFHNSPKEEEEERRGGRPLDQVQCVFPDTHVACSSRLVNCCLTSSFCRGLFSSLSTNRSLTELDLSDNTLGDPGMRVLCEALQHPGCNIQRLWLGRCGLSHQCCFDISSVLSSSQKLVELDLSDNALGDFGIRLLCVGLKHLLCNLQKLWLVSCCLTSACCQDLALVLSSNHSLTRLYIGENALGDSGVQVLCEKMKDPQCNLQKLGLVNSGLTSICCSALTSVLKTNQNFTHLYLRSNALGDTGLRLLCEGLLHPDCKLQMLELDNCSLTSHSCWNLSTILTHNHSLRKLNLGNNDLGDLCVVTLCEVLKQQGCLLQSLQLGEMYLNRETKRALEALQEEKPELTIVFEISW</sequence>
<name>NLRP3_MOUSE</name>
<proteinExistence type="evidence at protein level"/>
<accession>Q8R4B8</accession>
<accession>Q1JQ87</accession>
<accession>Q1JQ88</accession>
<accession>Q6JEL0</accession>
<accession>T1W2H6</accession>
<comment type="function">
    <text evidence="1 7 8 9 10 11 13 14 15 20 21 28 29 31 32 34 36 38 39 43 44 47">Sensor component of the NLRP3 inflammasome, which mediates inflammasome activation in response to defects in membrane integrity, leading to secretion of inflammatory cytokines IL1B and IL18 and pyroptosis (PubMed:19362020, PubMed:23582325, PubMed:26642356, PubMed:26814970, PubMed:27374331, PubMed:27929086, PubMed:28656979, PubMed:28847925, PubMed:30518920, PubMed:36178239). In response to pathogens and other damage-associated signals that affect the integrity of membranes, initiates the formation of the inflammasome polymeric complex composed of NLRP3, CASP1 and PYCARD/ASC (PubMed:16407889, PubMed:18403674, PubMed:19362020, PubMed:26642356, PubMed:26814970, PubMed:27374331, PubMed:28847925). Recruitment of pro-caspase-1 (proCASP1) to the NLRP3 inflammasome promotes caspase-1 (CASP1) activation, which subsequently cleaves and activates inflammatory cytokines IL1B and IL18 and gasdermin-D (GSDMD), promoting cytokine secretion and pyroptosis (PubMed:16546100, PubMed:17008311, PubMed:26642356, PubMed:26814970, PubMed:27374331, PubMed:28847925). Activation of NLRP3 inflammasome is also required for HMGB1 secretion; stimulating inflammatory responses (PubMed:22801494). Under resting conditions, ADP-bound NLRP3 is autoinhibited (By similarity). NLRP3 activation stimuli include extracellular ATP, nigericin, reactive oxygen species, crystals of monosodium urate or cholesterol, amyloid-beta fibers, environmental or industrial particles and nanoparticles, such as asbestos, silica, aluminum salts, cytosolic dsRNA, etc (PubMed:16407888, PubMed:16407889, PubMed:16407890, PubMed:18403674, PubMed:19362020, PubMed:37001519). Almost all stimuli trigger intracellular K(+) efflux (PubMed:23809161). These stimuli lead to membrane perturbation and activation of NLRP3 (By similarity). Upon activation, NLRP3 is transported to microtubule organizing center (MTOC), where it is unlocked by NEK7, leading to its relocalization to dispersed trans-Golgi network (dTGN) vesicle membranes and formation of an active inflammasome complex (PubMed:26814970, PubMed:34615873, PubMed:34861190). Associates with dTGN vesicle membranes by binding to phosphatidylinositol 4-phosphate (PtdIns4P) (PubMed:30487600). Shows ATPase activity (PubMed:34861190).</text>
</comment>
<comment type="function">
    <text evidence="26">Independently of inflammasome activation, regulates the differentiation of T helper 2 (Th2) cells and has a role in Th2 cell-dependent asthma and tumor growth (PubMed:26098997). During Th2 differentiation, required for optimal IRF4 binding to IL4 promoter and for IRF4-dependent IL4 transcription (PubMed:26098997). Binds to the consensus DNA sequence 5'-GRRGGNRGAG-3' (PubMed:26098997). May also participate in the transcription of IL5, IL13, GATA3, CCR3, CCR4 and MAF (PubMed:26098997).</text>
</comment>
<comment type="catalytic activity">
    <reaction evidence="44">
        <text>ATP + H2O = ADP + phosphate + H(+)</text>
        <dbReference type="Rhea" id="RHEA:13065"/>
        <dbReference type="ChEBI" id="CHEBI:15377"/>
        <dbReference type="ChEBI" id="CHEBI:15378"/>
        <dbReference type="ChEBI" id="CHEBI:30616"/>
        <dbReference type="ChEBI" id="CHEBI:43474"/>
        <dbReference type="ChEBI" id="CHEBI:456216"/>
    </reaction>
    <physiologicalReaction direction="left-to-right" evidence="44">
        <dbReference type="Rhea" id="RHEA:13066"/>
    </physiologicalReaction>
</comment>
<comment type="activity regulation">
    <text evidence="1 8 13 14 17 21 23 28 29 35 38 39 43 44 45">Under resting conditions, NLRP3 binds ADP and is autoinhibited (By similarity). Inactive NLRP3 forms homodecameric double-ring cages that hide pyrin domains within NACHT-LRR rings to avoid premature activation (PubMed:30518920, PubMed:34861190, PubMed:35254907). NLRP3 activation stimuli include extracellular ATP, nigericin, reactive oxygen species, crystals of monosodium urate or cholesterol, amyloid-beta fibers, environmental or industrial particles and nanoparticles, such as asbestos, silica, aluminum salts, cytosolic dsRNA, etc (PubMed:16407889, PubMed:18403674, PubMed:19362020). Almost all stimuli trigger intracellular K(+) efflux (PubMed:23809161). These stimuli lead to membrane perturbations that induce activation of NLRP3 (PubMed:34861190). Upon activation, NLRP3 is transported to microtubule organizing center (MTOC), where it is unlocked by NEK7, leading to its relocalization to dispersed trans-Golgi network (dTGN) vesicle membranes and recruitment of PYCARD/ASC for the formation of an active inflammasome complex (PubMed:26642356, PubMed:26814970, PubMed:28716882, PubMed:30487600, PubMed:34615873, PubMed:34861190). NEK7-activated NLRP3 forms a disk-shaped inflammasome (By similarity). NLRP3 and PYCARD/ASC interact via their respective pyrin domains; interaction initiates speck formation (nucleation) which greatly enhances further addition of soluble PYCARD/ASC molecules to the speck in a prion-like polymerization process (PubMed:24630723). Clustered PYCARD/ASC nucleates the formation of CASP1 filaments through the interaction of their respective CARD domains, acting as a platform for CASP1 polymerization and activation (By similarity). Active CASP1 then processes IL1B and IL18 precursors, leading to the release of mature cytokines in the extracellular milieu and inflammatory response (By similarity). NLRP3 inflammasome assembly is inhibited by IRGM, which impedes NLRP3 oligomerization (By similarity). NLRP3 inflammasome is inhibited by cyclic AMP (cAMP), which directly binds NLRP3; inhibition is relieved by calcium-sensing receptor CASR, which inhibits production of cAMP (PubMed:23143333). Specifically inhibited by sulfonylurea MCC950 (also named CP-456,773, CRID3), a potent and specific small-molecule inhibitor of the NLRP3 inflammasome that acts by preventing ATP hydrolysis (PubMed:35254907).</text>
</comment>
<comment type="subunit">
    <text evidence="1 12 15 20 23 26 27 28 29 34 38 40 43 44 45 46 47">Sensor component of NLRP3 inflammasomes; inflammasomes are supramolecular complexes that assemble in the cytosol in response to pathogens and other damage-associated signals and play critical roles in innate immunity and inflammation (PubMed:34861190). The core of NLRP3 inflammasomes consists of a signal sensor component (NLRP3), an adapter (PYCARD/ASC), which recruits an effector pro-inflammatory caspase (CASP1 and, possibly, CASP4 and CASP5) (PubMed:24630723). Homodecamer; inactive NLRP3 forms homodecameric double-ring cages that hide pyrin domains within NACHT-LRR rings to avoid premature activation (PubMed:34861190, PubMed:35254907). Interacts (via pyrin domain) with PYCARD/ASC (via pyrin domain); interaction is direct (PubMed:17907925, PubMed:30487600). Interacts (via LRR repeat domain) with NEK7 (via N-terminus); the interaction is required for the formation of the complex NLRP3:PYCARD, oligomerization of PYCARD/ASC and activation of CASP1 (PubMed:26553871, PubMed:26642356, PubMed:26814970, PubMed:34615873, PubMed:37001519). Interacts (via LRR repeat domain) with NR4A1/Nur77 (via N-terminus); the interaction is direct, requires activation of NR4A1 by its ligands NBRE-containing dsDNA and lipopolysaccharide, and stimulates the association of NLRP3 with NEK7 for non-canonical NLRP3 inflammasome activation (PubMed:37001519). Interacts with CARD8; leading to inhibit formation of the NLRP3 inflammasome (By similarity). Interacts with MEFV; this interaction targets NLRP3 to degradation by autophagy, hence preventing excessive IL1B- and IL18-mediated inflammation (By similarity). Interacts with EIF2AK2/PKR; this interaction requires EIF2AK2 activity, is accompanied by EIF2AK2 autophosphorylation and promotes inflammasome assembly in response to specific stimuli (PubMed:22801494). Interacts with GBP5 (via DAPIN domain); this interaction promotes inflammasome assembly in response to microbial and soluble, but not crystalline, agents (By similarity). Interacts with PML (isoform PML-1) (via the leucine-rich repeat (LRR) domain); PML-mediated increase in NLRP3 inflammasome activation does not depend upon this interaction (By similarity). Interacts (via NACHT domain) with DHX33 (via DEAH box); NLRP3 activation in presence of cytosolic dsRNA is mediated by DHX33 (By similarity). Interacts (via NACHT and LRR domains) with ARRB2; this interaction is direct and inducible by polyunsaturated fatty acids (PUFAs) (By similarity). Interacts (via NACHT domain) with DDX3X under both LPS-primed and inflammasome-activating conditions (PubMed:31511697). Interacts with IRF4 (via the LRR domain); this interaction is direct and is required for optimal IRF4 binding to IL4 promoter and efficient IL4 transactivation during differentiation of Th2 helper T-cells (PubMed:26098997). Interacts with MAVS; promoting localization to mitochondria and activation of the NLRP3 inflammasome (PubMed:23582325). Interacts with MARK4; promoting localization of NLRP3 to the microtubule organizing center (MTOC) (PubMed:28656979). Interacts with TRIM50; this interaction also promotes NLRP3 oligomerization and subsequent inflammasome activation (PubMed:36178239). Interacts with IRGM; preventing NLRP3 inflammasome assembly and promoting NLRP3 degradation (By similarity). Interacts (via KFERQ-like motifs) with HSPA8/HSC70; promoting NLRP3 degradation by the chaperone-mediated autophagy pathway (By similarity). Interacts (via NACHT and LLR domains) with ABHD8; this interaction is enhanced in the presence of NLRP3 inflammasome inducers, such as ATP, nigericin, silica, or alum. Interaction with ABHD8 leads the recruitment of ZDHHC12, hence facilitating NLRP3 palmitoylation and degradation by the chaperone-mediated autophagy pathway (CMA), therefore attenuating NLRP3 inflammasome activation (By similarity).</text>
</comment>
<comment type="interaction">
    <interactant intactId="EBI-6910832">
        <id>Q8R4B8</id>
    </interactant>
    <interactant intactId="EBI-489700">
        <id>P29452</id>
        <label>Casp1</label>
    </interactant>
    <organismsDiffer>false</organismsDiffer>
    <experiments>2</experiments>
</comment>
<comment type="interaction">
    <interactant intactId="EBI-6910832">
        <id>Q8R4B8</id>
    </interactant>
    <interactant intactId="EBI-2603444">
        <id>Q03963</id>
        <label>Eif2ak2</label>
    </interactant>
    <organismsDiffer>false</organismsDiffer>
    <experiments>3</experiments>
</comment>
<comment type="interaction">
    <interactant intactId="EBI-6910832">
        <id>Q8R4B8</id>
    </interactant>
    <interactant intactId="EBI-16193749">
        <id>Q9ES74</id>
        <label>Nek7</label>
    </interactant>
    <organismsDiffer>false</organismsDiffer>
    <experiments>2</experiments>
</comment>
<comment type="interaction">
    <interactant intactId="EBI-6910832">
        <id>Q8R4B8</id>
    </interactant>
    <interactant intactId="EBI-6253348">
        <id>Q9EPB4</id>
        <label>Pycard</label>
    </interactant>
    <organismsDiffer>false</organismsDiffer>
    <experiments>7</experiments>
</comment>
<comment type="subcellular location">
    <subcellularLocation>
        <location evidence="5 19 26 46">Cytoplasm</location>
        <location evidence="5 19 26 46">Cytosol</location>
    </subcellularLocation>
    <subcellularLocation>
        <location evidence="5 19 26">Inflammasome</location>
    </subcellularLocation>
    <subcellularLocation>
        <location evidence="34 44">Cytoplasm</location>
        <location evidence="34 44">Cytoskeleton</location>
        <location evidence="34 44">Microtubule organizing center</location>
    </subcellularLocation>
    <subcellularLocation>
        <location evidence="35 38">Golgi apparatus membrane</location>
    </subcellularLocation>
    <subcellularLocation>
        <location evidence="19">Endoplasmic reticulum</location>
    </subcellularLocation>
    <subcellularLocation>
        <location evidence="20">Mitochondrion</location>
    </subcellularLocation>
    <subcellularLocation>
        <location evidence="24">Secreted</location>
    </subcellularLocation>
    <subcellularLocation>
        <location evidence="26">Nucleus</location>
    </subcellularLocation>
    <text evidence="19 24 25 26 35 38 44">In macrophages, under resting conditions, mainly located in the cytosol and on membranes of various organelles, such as endoplasmic reticulum, mitochondria and Golgi: forms an inactive double-ring cage that is primarily localized on membranes (PubMed:23502856, PubMed:28716882, PubMed:34861190). Upon activation, NLRP3 is transported to microtubule organizing center (MTOC), where it is unlocked by NEK7, leading to its relocalization to dispersed trans-Golgi network (dTGN) vesicle membranes for the formation of an active inflammasome complex (PubMed:34861190). Recruited to dTGN vesicle membranes by binding to phosphatidylinositol 4-phosphate (PtdIns4P) (PubMed:30487600). After the induction of pyroptosis, inflammasome specks are released into the extracellular space where they can further promote IL1B processing and where they can be engulfed by macrophages. Phagocytosis induces lysosomal damage and inflammasome activation in the recipient cells (PubMed:24952504, PubMed:24952505). In the Th2 subset of CD4(+) helper T-cells, mainly located in the nucleus (PubMed:26098997). Nuclear localization depends upon KPNA2 (PubMed:26098997). In the Th1 subset of CD4(+) helper T-cells, mainly cytoplasmic (PubMed:26098997).</text>
</comment>
<comment type="alternative products">
    <event type="alternative splicing"/>
    <isoform>
        <id>Q8R4B8-1</id>
        <name>1</name>
        <name evidence="49">MMIG-1a</name>
        <sequence type="displayed"/>
    </isoform>
    <isoform>
        <id>Q8R4B8-2</id>
        <name>2</name>
        <name evidence="49">MMIG-1b</name>
        <sequence type="described" ref="VSP_014927"/>
    </isoform>
    <isoform>
        <id>Q8R4B8-3</id>
        <name>3</name>
        <name evidence="49">MMIG-1c</name>
        <sequence type="described" ref="VSP_014925"/>
    </isoform>
    <isoform>
        <id>Q8R4B8-4</id>
        <name>4</name>
        <name evidence="49">MMIG-1d</name>
        <sequence type="described" ref="VSP_014926"/>
    </isoform>
</comment>
<comment type="tissue specificity">
    <text evidence="6 10 12 26 36">Expressed with high levels in peripheral blood leukocytes, including Th2 lymphocytes and macrophages (PubMed:15302403, PubMed:16546100, PubMed:26098997, PubMed:28847925). Expressed at low levels in resting osteoblasts (at protein level) (PubMed:17907925).</text>
</comment>
<comment type="developmental stage">
    <text evidence="10 26">Up-regulated during CD4(+) T-lymphocyte differentiation, in Th0, Th1 and Th2 cells. Not detected in naive CD4(+) T-lymphocytes (at protein level).</text>
</comment>
<comment type="induction">
    <text evidence="10 12 26">By activators of Toll-like receptors, such as lipoteichoic acid (LTA) (TLR2), polyinosine-polycytidylic acid (poly(I:C), a synthetic analog of dsRNA) (TLR3) and bacterial lipopolysaccharides (LPS) (TLR4) (PubMed:16546100). Up-regulated by IL2 via STAT5 signaling (PubMed:26098997). Slightly up-regulated in osteoblasts after exposure to invasive, but not invasion-defective, strains of Salmonella typhimurium (at protein level) (PubMed:17907925).</text>
</comment>
<comment type="domain">
    <text evidence="1">The pyrin domain (also called DAPIN domain or PYD) is involved in PYCARD/ASC-binding.</text>
</comment>
<comment type="domain">
    <text evidence="1">The FISNA domain is a critical mediator of NLRP3 conformational during NLRP3 activation. It becomes ordered in its key regions during activation to stabilize the active NACHT conformation and mediate most interactions in the NLRP3 disk.</text>
</comment>
<comment type="domain">
    <text evidence="26 28 29 47">The LRR domain mediates the interaction with IRF4, PML, NEK7 and NR4A1/Nur77.</text>
</comment>
<comment type="domain">
    <text evidence="1">The KFERQ-like motifs mediate binding to HSPA8/HSC70 following NLRP3 paylmitoylation by ZDHHC12.</text>
</comment>
<comment type="PTM">
    <text evidence="1 30 33 35 37 42 43">Phosphorylation at Ser-194 by MAPK8/JNK1 increases inflammasome activation by promoting deubiquitination by BRCC3 and NLRP3 homooligomerization (PubMed:28943315). Phosphorylation at Ser-803 by CSNK1A1 prevents inflammasome activation by preventing NEK7 recruitment (PubMed:34615873). Phosphorylation at Ser-3 in the pyrin domain inhibits homomultimerization of NLRP3 and activation of the NLRP3 inflammasome: dephosphorylation by protein phosphatase 2A (PP2A) promotes assembly of the NLRP3 inflammasome (PubMed:28465465). Phosphorylation at Ser-291 by PKD/PRKD1 promotes NLRP3 inflammasome assembly (PubMed:28716882). Phosphorylation by ERK1/MAPK3 promotes NLRP3 inflammasome assembly (By similarity). Phosphorylation by BTK (at Tyr-132, Tyr-136, Tyr-145 and Tyr-164) in the region that mediates binding to phosphatidylinositol phosphate, promotes relocalization of NLRP3 and assembly of the NLRP3 inflammasome (PubMed:34554188). Phosphorylation at Tyr-858 inhibits NLRP3 inflammasome assembly: dephosphorylation by PTPN22 promotes inflammasome activation (PubMed:27043286) Phosphorylated by LATS1 and LATS2 at Ser-261 following palmitoylation by ZDHHC1, promoting its relocalization to the microtubule organizing center (MTOC), where NLRP3 is activated by NEK7, leading to inflammasome assembly and activation (By similarity).</text>
</comment>
<comment type="PTM">
    <text evidence="1 16 18 32">Ubiquitinated; undergoes both 'Lys-48'- and 'Lys-63'-linked polyubiquitination (PubMed:23246432). Ubiquitination does not lead to degradation, but inhibits inflammasome activation (PubMed:23246432). Deubiquitination is catalyzed by BRCC3 and associated with NLRP3 activation and inflammasome assembly (PubMed:23246432). This process can be induced by the activation of Toll-like receptors (by LPS), through a non-transcriptional pathway dependent on the mitochondrial production of reactive oxygen species, and by ATP (PubMed:22948162). Ubiquitinated by TRIM31 via 'Lys-48'-linked ubiquitination, leading to its degradation by the proteasome (PubMed:27929086). Ubiquitinated at Lys-687 by the SCF(FBXL2) complex, leading to its degradation by the proteasome (By similarity). Ubiquitinated by TRIM35 via 'lys-48' and 'Lys-63'-linked ubiquitination leading to inhibition of NLRP3 inflammasome activation (By similarity). Undergoes 'Lys-27'-linked polyubiquitination by MARCHF5, leading to NLRP3-NEK7 complex formation and NLRP3 oligomerization (By similarity).</text>
</comment>
<comment type="PTM">
    <text evidence="1">The disulfide bond in the pyrin domain might play a role in reactive oxygen species-mediated activation.</text>
</comment>
<comment type="PTM">
    <text evidence="1 48">Palmitoylation by ZDHHC12 promotes NLRP3 degradation by the chaperone-mediated autophagy pathway (CMA) and therefore limits NLRP3 inflammasome activation. Interaction with ZDHHC12, and hence NLRP3 palmitoylation, is enhanced by ABHD8 (By similarity). Following palmitoylation, HSPA8/HSC70 recognizes and binds the KFERQ-like motifs on NLRP3 and promotes NLRP3 recruitment to lysosomes, where it is degraded via the chaperone-mediated autophagy pathway in a LAMP2-dependent process (By similarity). Palmitoylation at Cys-834 and Cys-835 by ZDHHC5 enhances its binding to NEK7 leading to inflammasome assembly and activation (By similarity). Palmitoylation at Cys-126 and Cys-955 by ZDHHC1 facilitates phosphorylation at Ser-261 by LATS1 and LATS2, promoting its relocalization to the microtubule organizing center (MTOC), where NLRP3 is activated by NEK7, leading to inflammasome assembly and activation (PubMed:39173637). Depalmitoylated by ABHD17A (By similarity).</text>
</comment>
<comment type="PTM">
    <text evidence="1">Degraded via selective autophagy following interaction with Irgm1. Irgm1 promotes NLRP3 recruitment to autophagosome membranes, promoting its SQSTM1/p62-dependent autophagy-dependent degradation.</text>
</comment>
<comment type="disruption phenotype">
    <text evidence="7 9 10 13 22 26 41 47">Knockout mice are fertile and appear healthy when housed in a standard specific pathogen-free environment (PubMed:16407888, PubMed:16407890). They do not exhibit any increase in serum IL1B after administration of R837 (an analog to guanosine and TLR7 agonist) and/or LPS (PubMed:16407888, PubMed:16407890, PubMed:37001519). When challenged with LPS, mutant mice are partially resistant to endotoxic shock (PubMed:16407890, PubMed:16546100, PubMed:37001519). Mutant mice display impaired contact hypersensitivity, a T-cell-mediated cellular immune response to repeated epicutaneous exposure to contact allergens, such as trinitrophenylchloride (PubMed:16546100). In response to asbestos inhalation, mice show diminished recruitment of inflammatory cells to the lungs, paralleled by lower cytokine production (PubMed:18403674). In a model of allergic asthma that promotes strictly Th2 responses, mutant animals show less infiltration of eosinophils and lymphocytes into the lungs than their wild-type counterparts, as well as less accumulation of mucus and lymphoid infiltrates (PubMed:26098997). The concentration of Th2 cell-related cytokines, including IL-5 and IL-4, is also lower in lungs from mutant mice compared to wild-type (PubMed:26098997). Knockout mice develop insulin (INS) resistance in response to high-fat diet (PubMed:23809162). Mutants mice are protected from lung injury and cytokine production induced by human SARS coronavirus-2/SARS-CoV-2 N protein (PubMed:34341353).</text>
</comment>
<comment type="similarity">
    <text evidence="55">Belongs to the NLRP family.</text>
</comment>
<dbReference type="EC" id="3.6.4.-" evidence="44"/>
<dbReference type="EMBL" id="AF486632">
    <property type="protein sequence ID" value="AAL90874.1"/>
    <property type="molecule type" value="mRNA"/>
</dbReference>
<dbReference type="EMBL" id="AY495376">
    <property type="protein sequence ID" value="AAS75794.1"/>
    <property type="molecule type" value="mRNA"/>
</dbReference>
<dbReference type="EMBL" id="AY495377">
    <property type="protein sequence ID" value="AAS75795.1"/>
    <property type="molecule type" value="mRNA"/>
</dbReference>
<dbReference type="EMBL" id="AY337285">
    <property type="protein sequence ID" value="AAR03540.1"/>
    <property type="molecule type" value="mRNA"/>
</dbReference>
<dbReference type="EMBL" id="AY337292">
    <property type="protein sequence ID" value="AAR03541.1"/>
    <property type="molecule type" value="Genomic_DNA"/>
</dbReference>
<dbReference type="EMBL" id="AY337286">
    <property type="protein sequence ID" value="AAR03541.1"/>
    <property type="status" value="JOINED"/>
    <property type="molecule type" value="Genomic_DNA"/>
</dbReference>
<dbReference type="EMBL" id="AY337287">
    <property type="protein sequence ID" value="AAR03541.1"/>
    <property type="status" value="JOINED"/>
    <property type="molecule type" value="Genomic_DNA"/>
</dbReference>
<dbReference type="EMBL" id="AY337288">
    <property type="protein sequence ID" value="AAR03541.1"/>
    <property type="status" value="JOINED"/>
    <property type="molecule type" value="Genomic_DNA"/>
</dbReference>
<dbReference type="EMBL" id="AY337289">
    <property type="protein sequence ID" value="AAR03541.1"/>
    <property type="status" value="JOINED"/>
    <property type="molecule type" value="Genomic_DNA"/>
</dbReference>
<dbReference type="EMBL" id="AY337290">
    <property type="protein sequence ID" value="AAR03541.1"/>
    <property type="status" value="JOINED"/>
    <property type="molecule type" value="Genomic_DNA"/>
</dbReference>
<dbReference type="EMBL" id="AY337291">
    <property type="protein sequence ID" value="AAR03541.1"/>
    <property type="status" value="JOINED"/>
    <property type="molecule type" value="Genomic_DNA"/>
</dbReference>
<dbReference type="EMBL" id="AY337299">
    <property type="protein sequence ID" value="AAR03542.1"/>
    <property type="molecule type" value="Genomic_DNA"/>
</dbReference>
<dbReference type="EMBL" id="AY337293">
    <property type="protein sequence ID" value="AAR03542.1"/>
    <property type="status" value="JOINED"/>
    <property type="molecule type" value="Genomic_DNA"/>
</dbReference>
<dbReference type="EMBL" id="AY337294">
    <property type="protein sequence ID" value="AAR03542.1"/>
    <property type="status" value="JOINED"/>
    <property type="molecule type" value="Genomic_DNA"/>
</dbReference>
<dbReference type="EMBL" id="AY337295">
    <property type="protein sequence ID" value="AAR03542.1"/>
    <property type="status" value="JOINED"/>
    <property type="molecule type" value="Genomic_DNA"/>
</dbReference>
<dbReference type="EMBL" id="AY337296">
    <property type="protein sequence ID" value="AAR03542.1"/>
    <property type="status" value="JOINED"/>
    <property type="molecule type" value="Genomic_DNA"/>
</dbReference>
<dbReference type="EMBL" id="AY337297">
    <property type="protein sequence ID" value="AAR03542.1"/>
    <property type="status" value="JOINED"/>
    <property type="molecule type" value="Genomic_DNA"/>
</dbReference>
<dbReference type="EMBL" id="AY337298">
    <property type="protein sequence ID" value="AAR03542.1"/>
    <property type="status" value="JOINED"/>
    <property type="molecule type" value="Genomic_DNA"/>
</dbReference>
<dbReference type="EMBL" id="AY337306">
    <property type="protein sequence ID" value="AAR03543.1"/>
    <property type="molecule type" value="Genomic_DNA"/>
</dbReference>
<dbReference type="EMBL" id="AY337300">
    <property type="protein sequence ID" value="AAR03543.1"/>
    <property type="status" value="JOINED"/>
    <property type="molecule type" value="Genomic_DNA"/>
</dbReference>
<dbReference type="EMBL" id="AY337301">
    <property type="protein sequence ID" value="AAR03543.1"/>
    <property type="status" value="JOINED"/>
    <property type="molecule type" value="Genomic_DNA"/>
</dbReference>
<dbReference type="EMBL" id="AY337302">
    <property type="protein sequence ID" value="AAR03543.1"/>
    <property type="status" value="JOINED"/>
    <property type="molecule type" value="Genomic_DNA"/>
</dbReference>
<dbReference type="EMBL" id="AY337303">
    <property type="protein sequence ID" value="AAR03543.1"/>
    <property type="status" value="JOINED"/>
    <property type="molecule type" value="Genomic_DNA"/>
</dbReference>
<dbReference type="EMBL" id="AY337304">
    <property type="protein sequence ID" value="AAR03543.1"/>
    <property type="status" value="JOINED"/>
    <property type="molecule type" value="Genomic_DNA"/>
</dbReference>
<dbReference type="EMBL" id="AY337305">
    <property type="protein sequence ID" value="AAR03543.1"/>
    <property type="status" value="JOINED"/>
    <property type="molecule type" value="Genomic_DNA"/>
</dbReference>
<dbReference type="EMBL" id="AY355340">
    <property type="protein sequence ID" value="AAR14737.1"/>
    <property type="molecule type" value="mRNA"/>
</dbReference>
<dbReference type="EMBL" id="KF032621">
    <property type="protein sequence ID" value="AGU01502.1"/>
    <property type="molecule type" value="mRNA"/>
</dbReference>
<dbReference type="EMBL" id="AL592522">
    <property type="status" value="NOT_ANNOTATED_CDS"/>
    <property type="molecule type" value="Genomic_DNA"/>
</dbReference>
<dbReference type="EMBL" id="BC116174">
    <property type="protein sequence ID" value="AAI16175.1"/>
    <property type="molecule type" value="mRNA"/>
</dbReference>
<dbReference type="EMBL" id="BC116175">
    <property type="protein sequence ID" value="AAI16176.1"/>
    <property type="molecule type" value="mRNA"/>
</dbReference>
<dbReference type="CCDS" id="CCDS24771.1">
    <molecule id="Q8R4B8-1"/>
</dbReference>
<dbReference type="RefSeq" id="NP_001346567.1">
    <molecule id="Q8R4B8-1"/>
    <property type="nucleotide sequence ID" value="NM_001359638.1"/>
</dbReference>
<dbReference type="RefSeq" id="NP_665826.1">
    <molecule id="Q8R4B8-1"/>
    <property type="nucleotide sequence ID" value="NM_145827.4"/>
</dbReference>
<dbReference type="RefSeq" id="XP_006532920.1">
    <property type="nucleotide sequence ID" value="XM_006532857.1"/>
</dbReference>
<dbReference type="RefSeq" id="XP_006532921.1">
    <molecule id="Q8R4B8-1"/>
    <property type="nucleotide sequence ID" value="XM_006532858.2"/>
</dbReference>
<dbReference type="RefSeq" id="XP_036012441.1">
    <molecule id="Q8R4B8-1"/>
    <property type="nucleotide sequence ID" value="XM_036156548.1"/>
</dbReference>
<dbReference type="RefSeq" id="XP_036012442.1">
    <molecule id="Q8R4B8-2"/>
    <property type="nucleotide sequence ID" value="XM_036156549.1"/>
</dbReference>
<dbReference type="PDB" id="7LFH">
    <property type="method" value="EM"/>
    <property type="resolution" value="4.20 A"/>
    <property type="chains" value="A/B/C/D/E/F/G/H/I/J/K/L=1-1033"/>
</dbReference>
<dbReference type="PDB" id="7VTQ">
    <property type="method" value="EM"/>
    <property type="resolution" value="3.55 A"/>
    <property type="chains" value="A/B/C/D/E/F/G/H/I/J/K/L=1-1033"/>
</dbReference>
<dbReference type="PDBsum" id="7LFH"/>
<dbReference type="PDBsum" id="7VTQ"/>
<dbReference type="EMDB" id="EMD-23302"/>
<dbReference type="EMDB" id="EMD-32120"/>
<dbReference type="SMR" id="Q8R4B8"/>
<dbReference type="BioGRID" id="229789">
    <property type="interactions" value="50"/>
</dbReference>
<dbReference type="ComplexPortal" id="CPX-4241">
    <property type="entry name" value="NLRP3 inflammasome"/>
</dbReference>
<dbReference type="CORUM" id="Q8R4B8"/>
<dbReference type="DIP" id="DIP-60132N"/>
<dbReference type="FunCoup" id="Q8R4B8">
    <property type="interactions" value="958"/>
</dbReference>
<dbReference type="IntAct" id="Q8R4B8">
    <property type="interactions" value="6"/>
</dbReference>
<dbReference type="MINT" id="Q8R4B8"/>
<dbReference type="STRING" id="10090.ENSMUSP00000098707"/>
<dbReference type="BindingDB" id="Q8R4B8"/>
<dbReference type="ChEMBL" id="CHEMBL3779755"/>
<dbReference type="DrugCentral" id="Q8R4B8"/>
<dbReference type="iPTMnet" id="Q8R4B8"/>
<dbReference type="PhosphoSitePlus" id="Q8R4B8"/>
<dbReference type="SwissPalm" id="Q8R4B8"/>
<dbReference type="PaxDb" id="10090-ENSMUSP00000098707"/>
<dbReference type="ProteomicsDB" id="293858">
    <molecule id="Q8R4B8-1"/>
</dbReference>
<dbReference type="ProteomicsDB" id="293859">
    <molecule id="Q8R4B8-2"/>
</dbReference>
<dbReference type="ProteomicsDB" id="293860">
    <molecule id="Q8R4B8-3"/>
</dbReference>
<dbReference type="ProteomicsDB" id="293861">
    <molecule id="Q8R4B8-4"/>
</dbReference>
<dbReference type="Antibodypedia" id="624">
    <property type="antibodies" value="780 antibodies from 45 providers"/>
</dbReference>
<dbReference type="DNASU" id="216799"/>
<dbReference type="Ensembl" id="ENSMUST00000079476.10">
    <molecule id="Q8R4B8-1"/>
    <property type="protein sequence ID" value="ENSMUSP00000078440.4"/>
    <property type="gene ID" value="ENSMUSG00000032691.15"/>
</dbReference>
<dbReference type="Ensembl" id="ENSMUST00000101148.9">
    <molecule id="Q8R4B8-1"/>
    <property type="protein sequence ID" value="ENSMUSP00000098707.3"/>
    <property type="gene ID" value="ENSMUSG00000032691.15"/>
</dbReference>
<dbReference type="GeneID" id="216799"/>
<dbReference type="KEGG" id="mmu:216799"/>
<dbReference type="UCSC" id="uc007jeh.1">
    <molecule id="Q8R4B8-1"/>
    <property type="organism name" value="mouse"/>
</dbReference>
<dbReference type="AGR" id="MGI:2653833"/>
<dbReference type="CTD" id="114548"/>
<dbReference type="MGI" id="MGI:2653833">
    <property type="gene designation" value="Nlrp3"/>
</dbReference>
<dbReference type="VEuPathDB" id="HostDB:ENSMUSG00000032691"/>
<dbReference type="eggNOG" id="ENOG502SBIG">
    <property type="taxonomic scope" value="Eukaryota"/>
</dbReference>
<dbReference type="GeneTree" id="ENSGT00940000162415"/>
<dbReference type="HOGENOM" id="CLU_002274_2_0_1"/>
<dbReference type="InParanoid" id="Q8R4B8"/>
<dbReference type="OMA" id="HLFCNLQ"/>
<dbReference type="OrthoDB" id="120976at2759"/>
<dbReference type="PhylomeDB" id="Q8R4B8"/>
<dbReference type="Reactome" id="R-MMU-5689901">
    <property type="pathway name" value="Metalloprotease DUBs"/>
</dbReference>
<dbReference type="Reactome" id="R-MMU-844456">
    <property type="pathway name" value="The NLRP3 inflammasome"/>
</dbReference>
<dbReference type="BioGRID-ORCS" id="216799">
    <property type="hits" value="0 hits in 77 CRISPR screens"/>
</dbReference>
<dbReference type="PRO" id="PR:Q8R4B8"/>
<dbReference type="Proteomes" id="UP000000589">
    <property type="component" value="Chromosome 11"/>
</dbReference>
<dbReference type="RNAct" id="Q8R4B8">
    <property type="molecule type" value="protein"/>
</dbReference>
<dbReference type="Bgee" id="ENSMUSG00000032691">
    <property type="expression patterns" value="Expressed in granulocyte and 46 other cell types or tissues"/>
</dbReference>
<dbReference type="ExpressionAtlas" id="Q8R4B8">
    <property type="expression patterns" value="baseline and differential"/>
</dbReference>
<dbReference type="GO" id="GO:0061702">
    <property type="term" value="C:canonical inflammasome complex"/>
    <property type="evidence" value="ECO:0000314"/>
    <property type="project" value="MGI"/>
</dbReference>
<dbReference type="GO" id="GO:0005737">
    <property type="term" value="C:cytoplasm"/>
    <property type="evidence" value="ECO:0000314"/>
    <property type="project" value="UniProtKB"/>
</dbReference>
<dbReference type="GO" id="GO:0005829">
    <property type="term" value="C:cytosol"/>
    <property type="evidence" value="ECO:0000304"/>
    <property type="project" value="Reactome"/>
</dbReference>
<dbReference type="GO" id="GO:0005783">
    <property type="term" value="C:endoplasmic reticulum"/>
    <property type="evidence" value="ECO:0007669"/>
    <property type="project" value="UniProtKB-SubCell"/>
</dbReference>
<dbReference type="GO" id="GO:0005576">
    <property type="term" value="C:extracellular region"/>
    <property type="evidence" value="ECO:0007669"/>
    <property type="project" value="UniProtKB-SubCell"/>
</dbReference>
<dbReference type="GO" id="GO:0000139">
    <property type="term" value="C:Golgi membrane"/>
    <property type="evidence" value="ECO:0007669"/>
    <property type="project" value="UniProtKB-SubCell"/>
</dbReference>
<dbReference type="GO" id="GO:0031021">
    <property type="term" value="C:interphase microtubule organizing center"/>
    <property type="evidence" value="ECO:0000314"/>
    <property type="project" value="UniProtKB"/>
</dbReference>
<dbReference type="GO" id="GO:0016020">
    <property type="term" value="C:membrane"/>
    <property type="evidence" value="ECO:0000314"/>
    <property type="project" value="UniProtKB"/>
</dbReference>
<dbReference type="GO" id="GO:0005815">
    <property type="term" value="C:microtubule organizing center"/>
    <property type="evidence" value="ECO:0000314"/>
    <property type="project" value="UniProtKB"/>
</dbReference>
<dbReference type="GO" id="GO:0005739">
    <property type="term" value="C:mitochondrion"/>
    <property type="evidence" value="ECO:0000314"/>
    <property type="project" value="UniProtKB"/>
</dbReference>
<dbReference type="GO" id="GO:0072559">
    <property type="term" value="C:NLRP3 inflammasome complex"/>
    <property type="evidence" value="ECO:0000315"/>
    <property type="project" value="CAFA"/>
</dbReference>
<dbReference type="GO" id="GO:0005634">
    <property type="term" value="C:nucleus"/>
    <property type="evidence" value="ECO:0000314"/>
    <property type="project" value="UniProtKB"/>
</dbReference>
<dbReference type="GO" id="GO:0043531">
    <property type="term" value="F:ADP binding"/>
    <property type="evidence" value="ECO:0000250"/>
    <property type="project" value="UniProtKB"/>
</dbReference>
<dbReference type="GO" id="GO:0005524">
    <property type="term" value="F:ATP binding"/>
    <property type="evidence" value="ECO:0000250"/>
    <property type="project" value="UniProtKB"/>
</dbReference>
<dbReference type="GO" id="GO:0016887">
    <property type="term" value="F:ATP hydrolysis activity"/>
    <property type="evidence" value="ECO:0000314"/>
    <property type="project" value="UniProtKB"/>
</dbReference>
<dbReference type="GO" id="GO:0140297">
    <property type="term" value="F:DNA-binding transcription factor binding"/>
    <property type="evidence" value="ECO:0000314"/>
    <property type="project" value="UniProtKB"/>
</dbReference>
<dbReference type="GO" id="GO:0140299">
    <property type="term" value="F:molecular sensor activity"/>
    <property type="evidence" value="ECO:0000314"/>
    <property type="project" value="UniProtKB"/>
</dbReference>
<dbReference type="GO" id="GO:1901981">
    <property type="term" value="F:phosphatidylinositol phosphate binding"/>
    <property type="evidence" value="ECO:0000314"/>
    <property type="project" value="UniProtKB"/>
</dbReference>
<dbReference type="GO" id="GO:0070273">
    <property type="term" value="F:phosphatidylinositol-4-phosphate binding"/>
    <property type="evidence" value="ECO:0000314"/>
    <property type="project" value="UniProtKB"/>
</dbReference>
<dbReference type="GO" id="GO:0043565">
    <property type="term" value="F:sequence-specific DNA binding"/>
    <property type="evidence" value="ECO:0000314"/>
    <property type="project" value="UniProtKB"/>
</dbReference>
<dbReference type="GO" id="GO:0035591">
    <property type="term" value="F:signaling adaptor activity"/>
    <property type="evidence" value="ECO:0000314"/>
    <property type="project" value="UniProtKB"/>
</dbReference>
<dbReference type="GO" id="GO:0002526">
    <property type="term" value="P:acute inflammatory response"/>
    <property type="evidence" value="ECO:0000314"/>
    <property type="project" value="MGI"/>
</dbReference>
<dbReference type="GO" id="GO:0071222">
    <property type="term" value="P:cellular response to lipopolysaccharide"/>
    <property type="evidence" value="ECO:0000314"/>
    <property type="project" value="UniProtKB"/>
</dbReference>
<dbReference type="GO" id="GO:0071224">
    <property type="term" value="P:cellular response to peptidoglycan"/>
    <property type="evidence" value="ECO:0000315"/>
    <property type="project" value="CAFA"/>
</dbReference>
<dbReference type="GO" id="GO:0050830">
    <property type="term" value="P:defense response to Gram-positive bacterium"/>
    <property type="evidence" value="ECO:0000315"/>
    <property type="project" value="CAFA"/>
</dbReference>
<dbReference type="GO" id="GO:0051607">
    <property type="term" value="P:defense response to virus"/>
    <property type="evidence" value="ECO:0000315"/>
    <property type="project" value="MGI"/>
</dbReference>
<dbReference type="GO" id="GO:0009595">
    <property type="term" value="P:detection of biotic stimulus"/>
    <property type="evidence" value="ECO:0000314"/>
    <property type="project" value="UniProtKB"/>
</dbReference>
<dbReference type="GO" id="GO:0006954">
    <property type="term" value="P:inflammatory response"/>
    <property type="evidence" value="ECO:0000314"/>
    <property type="project" value="UniProtKB"/>
</dbReference>
<dbReference type="GO" id="GO:0045087">
    <property type="term" value="P:innate immune response"/>
    <property type="evidence" value="ECO:0007669"/>
    <property type="project" value="UniProtKB-KW"/>
</dbReference>
<dbReference type="GO" id="GO:0002523">
    <property type="term" value="P:leukocyte migration involved in inflammatory response"/>
    <property type="evidence" value="ECO:0007669"/>
    <property type="project" value="Ensembl"/>
</dbReference>
<dbReference type="GO" id="GO:1901223">
    <property type="term" value="P:negative regulation of non-canonical NF-kappaB signal transduction"/>
    <property type="evidence" value="ECO:0000250"/>
    <property type="project" value="HGNC-UCL"/>
</dbReference>
<dbReference type="GO" id="GO:0044546">
    <property type="term" value="P:NLRP3 inflammasome complex assembly"/>
    <property type="evidence" value="ECO:0000314"/>
    <property type="project" value="UniProtKB"/>
</dbReference>
<dbReference type="GO" id="GO:0007231">
    <property type="term" value="P:osmosensory signaling pathway"/>
    <property type="evidence" value="ECO:0000303"/>
    <property type="project" value="ComplexPortal"/>
</dbReference>
<dbReference type="GO" id="GO:0002221">
    <property type="term" value="P:pattern recognition receptor signaling pathway"/>
    <property type="evidence" value="ECO:0000303"/>
    <property type="project" value="ComplexPortal"/>
</dbReference>
<dbReference type="GO" id="GO:0002720">
    <property type="term" value="P:positive regulation of cytokine production involved in immune response"/>
    <property type="evidence" value="ECO:0000315"/>
    <property type="project" value="CAFA"/>
</dbReference>
<dbReference type="GO" id="GO:0050729">
    <property type="term" value="P:positive regulation of inflammatory response"/>
    <property type="evidence" value="ECO:0000314"/>
    <property type="project" value="UniProtKB"/>
</dbReference>
<dbReference type="GO" id="GO:0032731">
    <property type="term" value="P:positive regulation of interleukin-1 beta production"/>
    <property type="evidence" value="ECO:0000314"/>
    <property type="project" value="UniProtKB"/>
</dbReference>
<dbReference type="GO" id="GO:0032736">
    <property type="term" value="P:positive regulation of interleukin-13 production"/>
    <property type="evidence" value="ECO:0000315"/>
    <property type="project" value="UniProtKB"/>
</dbReference>
<dbReference type="GO" id="GO:0032753">
    <property type="term" value="P:positive regulation of interleukin-4 production"/>
    <property type="evidence" value="ECO:0000314"/>
    <property type="project" value="UniProtKB"/>
</dbReference>
<dbReference type="GO" id="GO:0032754">
    <property type="term" value="P:positive regulation of interleukin-5 production"/>
    <property type="evidence" value="ECO:0000315"/>
    <property type="project" value="UniProtKB"/>
</dbReference>
<dbReference type="GO" id="GO:2000321">
    <property type="term" value="P:positive regulation of T-helper 17 cell differentiation"/>
    <property type="evidence" value="ECO:0000315"/>
    <property type="project" value="UniProtKB"/>
</dbReference>
<dbReference type="GO" id="GO:2000553">
    <property type="term" value="P:positive regulation of T-helper 2 cell cytokine production"/>
    <property type="evidence" value="ECO:0000315"/>
    <property type="project" value="UniProtKB"/>
</dbReference>
<dbReference type="GO" id="GO:0045630">
    <property type="term" value="P:positive regulation of T-helper 2 cell differentiation"/>
    <property type="evidence" value="ECO:0000315"/>
    <property type="project" value="UniProtKB"/>
</dbReference>
<dbReference type="GO" id="GO:0045944">
    <property type="term" value="P:positive regulation of transcription by RNA polymerase II"/>
    <property type="evidence" value="ECO:0000314"/>
    <property type="project" value="UniProtKB"/>
</dbReference>
<dbReference type="GO" id="GO:0002830">
    <property type="term" value="P:positive regulation of type 2 immune response"/>
    <property type="evidence" value="ECO:0000315"/>
    <property type="project" value="UniProtKB"/>
</dbReference>
<dbReference type="GO" id="GO:0051260">
    <property type="term" value="P:protein homooligomerization"/>
    <property type="evidence" value="ECO:0000314"/>
    <property type="project" value="UniProtKB"/>
</dbReference>
<dbReference type="GO" id="GO:0070269">
    <property type="term" value="P:pyroptotic inflammatory response"/>
    <property type="evidence" value="ECO:0000303"/>
    <property type="project" value="ComplexPortal"/>
</dbReference>
<dbReference type="GO" id="GO:0050727">
    <property type="term" value="P:regulation of inflammatory response"/>
    <property type="evidence" value="ECO:0000315"/>
    <property type="project" value="MGI"/>
</dbReference>
<dbReference type="GO" id="GO:0045471">
    <property type="term" value="P:response to ethanol"/>
    <property type="evidence" value="ECO:0007669"/>
    <property type="project" value="Ensembl"/>
</dbReference>
<dbReference type="CDD" id="cd00116">
    <property type="entry name" value="LRR_RI"/>
    <property type="match status" value="1"/>
</dbReference>
<dbReference type="CDD" id="cd08320">
    <property type="entry name" value="Pyrin_NALPs"/>
    <property type="match status" value="1"/>
</dbReference>
<dbReference type="FunFam" id="1.10.533.10:FF:000019">
    <property type="entry name" value="NACHT, LRR and PYD domains-containing protein 3"/>
    <property type="match status" value="1"/>
</dbReference>
<dbReference type="FunFam" id="3.40.50.300:FF:000442">
    <property type="entry name" value="NACHT, LRR and PYD domains-containing protein 3"/>
    <property type="match status" value="1"/>
</dbReference>
<dbReference type="FunFam" id="3.80.10.10:FF:000360">
    <property type="entry name" value="NACHT, LRR and PYD domains-containing protein 3"/>
    <property type="match status" value="1"/>
</dbReference>
<dbReference type="Gene3D" id="1.10.533.10">
    <property type="entry name" value="Death Domain, Fas"/>
    <property type="match status" value="1"/>
</dbReference>
<dbReference type="Gene3D" id="3.40.50.300">
    <property type="entry name" value="P-loop containing nucleotide triphosphate hydrolases"/>
    <property type="match status" value="1"/>
</dbReference>
<dbReference type="Gene3D" id="3.80.10.10">
    <property type="entry name" value="Ribonuclease Inhibitor"/>
    <property type="match status" value="1"/>
</dbReference>
<dbReference type="InterPro" id="IPR004020">
    <property type="entry name" value="DAPIN"/>
</dbReference>
<dbReference type="InterPro" id="IPR011029">
    <property type="entry name" value="DEATH-like_dom_sf"/>
</dbReference>
<dbReference type="InterPro" id="IPR001611">
    <property type="entry name" value="Leu-rich_rpt"/>
</dbReference>
<dbReference type="InterPro" id="IPR032675">
    <property type="entry name" value="LRR_dom_sf"/>
</dbReference>
<dbReference type="InterPro" id="IPR029495">
    <property type="entry name" value="NACHT-assoc"/>
</dbReference>
<dbReference type="InterPro" id="IPR007111">
    <property type="entry name" value="NACHT_NTPase"/>
</dbReference>
<dbReference type="InterPro" id="IPR041267">
    <property type="entry name" value="NLRP_HD2"/>
</dbReference>
<dbReference type="InterPro" id="IPR050637">
    <property type="entry name" value="NLRP_innate_immun_reg"/>
</dbReference>
<dbReference type="InterPro" id="IPR041075">
    <property type="entry name" value="NOD1/2_WH"/>
</dbReference>
<dbReference type="InterPro" id="IPR027417">
    <property type="entry name" value="P-loop_NTPase"/>
</dbReference>
<dbReference type="PANTHER" id="PTHR45690">
    <property type="entry name" value="NACHT, LRR AND PYD DOMAINS-CONTAINING PROTEIN 12"/>
    <property type="match status" value="1"/>
</dbReference>
<dbReference type="PANTHER" id="PTHR45690:SF19">
    <property type="entry name" value="NACHT, LRR AND PYD DOMAINS-CONTAINING PROTEIN 3"/>
    <property type="match status" value="1"/>
</dbReference>
<dbReference type="Pfam" id="PF14484">
    <property type="entry name" value="FISNA"/>
    <property type="match status" value="1"/>
</dbReference>
<dbReference type="Pfam" id="PF13516">
    <property type="entry name" value="LRR_6"/>
    <property type="match status" value="5"/>
</dbReference>
<dbReference type="Pfam" id="PF05729">
    <property type="entry name" value="NACHT"/>
    <property type="match status" value="1"/>
</dbReference>
<dbReference type="Pfam" id="PF17776">
    <property type="entry name" value="NLRC4_HD2"/>
    <property type="match status" value="1"/>
</dbReference>
<dbReference type="Pfam" id="PF17779">
    <property type="entry name" value="NOD2_WH"/>
    <property type="match status" value="1"/>
</dbReference>
<dbReference type="Pfam" id="PF02758">
    <property type="entry name" value="PYRIN"/>
    <property type="match status" value="1"/>
</dbReference>
<dbReference type="SMART" id="SM01288">
    <property type="entry name" value="FISNA"/>
    <property type="match status" value="1"/>
</dbReference>
<dbReference type="SMART" id="SM00368">
    <property type="entry name" value="LRR_RI"/>
    <property type="match status" value="9"/>
</dbReference>
<dbReference type="SMART" id="SM01289">
    <property type="entry name" value="PYRIN"/>
    <property type="match status" value="1"/>
</dbReference>
<dbReference type="SUPFAM" id="SSF47986">
    <property type="entry name" value="DEATH domain"/>
    <property type="match status" value="1"/>
</dbReference>
<dbReference type="SUPFAM" id="SSF52540">
    <property type="entry name" value="P-loop containing nucleoside triphosphate hydrolases"/>
    <property type="match status" value="1"/>
</dbReference>
<dbReference type="SUPFAM" id="SSF52047">
    <property type="entry name" value="RNI-like"/>
    <property type="match status" value="1"/>
</dbReference>
<dbReference type="PROSITE" id="PS50824">
    <property type="entry name" value="DAPIN"/>
    <property type="match status" value="1"/>
</dbReference>
<dbReference type="PROSITE" id="PS51450">
    <property type="entry name" value="LRR"/>
    <property type="match status" value="5"/>
</dbReference>
<dbReference type="PROSITE" id="PS50837">
    <property type="entry name" value="NACHT"/>
    <property type="match status" value="1"/>
</dbReference>
<gene>
    <name evidence="54 58" type="primary">Nlrp3</name>
    <name evidence="50" type="synonym">Cias1</name>
    <name evidence="49" type="synonym">Mmig1</name>
    <name evidence="52" type="synonym">Nalp3</name>
    <name evidence="49" type="synonym">Pypaf1</name>
</gene>
<protein>
    <recommendedName>
        <fullName evidence="55">NACHT, LRR and PYD domains-containing protein 3</fullName>
        <ecNumber evidence="44">3.6.4.-</ecNumber>
    </recommendedName>
    <alternativeName>
        <fullName evidence="50">Cold autoinflammatory syndrome 1 protein homolog</fullName>
    </alternativeName>
    <alternativeName>
        <fullName evidence="53">Cryopyrin</fullName>
    </alternativeName>
    <alternativeName>
        <fullName evidence="49">Mast cell maturation-associated-inducible protein 1</fullName>
    </alternativeName>
    <alternativeName>
        <fullName evidence="49">PYRIN-containing APAF1-like protein 1</fullName>
    </alternativeName>
</protein>